<accession>Q15831</accession>
<accession>B2RBX7</accession>
<accession>E7EW76</accession>
<comment type="function">
    <text evidence="10 14 15 16 17 18 19 20 27 32">Tumor suppressor serine/threonine-protein kinase that controls the activity of AMP-activated protein kinase (AMPK) family members, thereby playing a role in various processes such as cell metabolism, cell polarity, apoptosis and DNA damage response. Acts by phosphorylating the T-loop of AMPK family proteins, thus promoting their activity: phosphorylates PRKAA1, PRKAA2, BRSK1, BRSK2, MARK1, MARK2, MARK3, MARK4, NUAK1, NUAK2, SIK1, SIK2, SIK3 and SNRK but not MELK. Also phosphorylates non-AMPK family proteins such as STRADA, PTEN and possibly p53/TP53. Acts as a key upstream regulator of AMPK by mediating phosphorylation and activation of AMPK catalytic subunits PRKAA1 and PRKAA2 and thereby regulates processes including: inhibition of signaling pathways that promote cell growth and proliferation when energy levels are low, glucose homeostasis in liver, activation of autophagy when cells undergo nutrient deprivation, and B-cell differentiation in the germinal center in response to DNA damage. Also acts as a regulator of cellular polarity by remodeling the actin cytoskeleton. Required for cortical neuron polarization by mediating phosphorylation and activation of BRSK1 and BRSK2, leading to axon initiation and specification. Involved in DNA damage response: interacts with p53/TP53 and recruited to the CDKN1A/WAF1 promoter to participate in transcription activation. Able to phosphorylate p53/TP53; the relevance of such result in vivo is however unclear and phosphorylation may be indirect and mediated by downstream STK11/LKB1 kinase NUAK1. Also acts as a mediator of p53/TP53-dependent apoptosis via interaction with p53/TP53: translocates to the mitochondrion during apoptosis and regulates p53/TP53-dependent apoptosis pathways. Regulates UV radiation-induced DNA damage response mediated by CDKN1A. In association with NUAK1, phosphorylates CDKN1A in response to UV radiation and contributes to its degradation which is necessary for optimal DNA repair (PubMed:25329316).</text>
</comment>
<comment type="function">
    <molecule>Isoform 2</molecule>
    <text evidence="1">Has a role in spermiogenesis.</text>
</comment>
<comment type="catalytic activity">
    <reaction evidence="16">
        <text>L-seryl-[protein] + ATP = O-phospho-L-seryl-[protein] + ADP + H(+)</text>
        <dbReference type="Rhea" id="RHEA:17989"/>
        <dbReference type="Rhea" id="RHEA-COMP:9863"/>
        <dbReference type="Rhea" id="RHEA-COMP:11604"/>
        <dbReference type="ChEBI" id="CHEBI:15378"/>
        <dbReference type="ChEBI" id="CHEBI:29999"/>
        <dbReference type="ChEBI" id="CHEBI:30616"/>
        <dbReference type="ChEBI" id="CHEBI:83421"/>
        <dbReference type="ChEBI" id="CHEBI:456216"/>
        <dbReference type="EC" id="2.7.11.1"/>
    </reaction>
</comment>
<comment type="catalytic activity">
    <reaction evidence="16">
        <text>L-threonyl-[protein] + ATP = O-phospho-L-threonyl-[protein] + ADP + H(+)</text>
        <dbReference type="Rhea" id="RHEA:46608"/>
        <dbReference type="Rhea" id="RHEA-COMP:11060"/>
        <dbReference type="Rhea" id="RHEA-COMP:11605"/>
        <dbReference type="ChEBI" id="CHEBI:15378"/>
        <dbReference type="ChEBI" id="CHEBI:30013"/>
        <dbReference type="ChEBI" id="CHEBI:30616"/>
        <dbReference type="ChEBI" id="CHEBI:61977"/>
        <dbReference type="ChEBI" id="CHEBI:456216"/>
        <dbReference type="EC" id="2.7.11.1"/>
    </reaction>
</comment>
<comment type="cofactor">
    <cofactor>
        <name>Mg(2+)</name>
        <dbReference type="ChEBI" id="CHEBI:18420"/>
    </cofactor>
    <cofactor>
        <name>Mn(2+)</name>
        <dbReference type="ChEBI" id="CHEBI:29035"/>
    </cofactor>
</comment>
<comment type="activity regulation">
    <text evidence="26 29">Activated by forming a complex with STRAD (STRADA or STRADB) and CAB39/MO25 (CAB39/MO25alpha or CAB39L/MO25beta): STRADA (or STRADB)-binding promotes a conformational change of STK11/LKB1 in an active conformation, which is stabilized by CAB39/MO25alpha (or CAB39L/MO25beta) interacting with the STK11/LKB1 activation loop. Sequestration in the nucleus by NR4A1 prevents it from phosphorylating and activating cytoplasmic AMPK.</text>
</comment>
<comment type="subunit">
    <text evidence="11 14 15 19 20 21 24 26 29 30 32">Catalytic component of a trimeric complex composed of STK11/LKB1, STRAD (STRADA or STRADB) and CAB39/MO25 (CAB39/MO25alpha or CAB39L/MO25beta): the complex tethers STK11/LKB1 in the cytoplasm and stimulates its catalytic activity. Found in a ternary complex composed of SMAD4, STK11/LKB1 and STK11IP. Interacts with p53/TP53, SMAD4, STK11IP and WDR6. Interacts with NR4A1. Interacts with NISCH; this interaction may increase STK11 activity. Interacts with PTEN; leading to PTEN phosphorylation. Interacts with SIRT1; the interaction deacetylates STK11. Interacts with CDKN1A.</text>
</comment>
<comment type="interaction">
    <interactant intactId="EBI-306838">
        <id>Q15831</id>
    </interactant>
    <interactant intactId="EBI-306905">
        <id>Q9Y376</id>
        <label>CAB39</label>
    </interactant>
    <organismsDiffer>false</organismsDiffer>
    <experiments>20</experiments>
</comment>
<comment type="interaction">
    <interactant intactId="EBI-306838">
        <id>Q15831</id>
    </interactant>
    <interactant intactId="EBI-295634">
        <id>Q16543</id>
        <label>CDC37</label>
    </interactant>
    <organismsDiffer>false</organismsDiffer>
    <experiments>6</experiments>
</comment>
<comment type="interaction">
    <interactant intactId="EBI-306838">
        <id>Q15831</id>
    </interactant>
    <interactant intactId="EBI-742413">
        <id>Q9BT78</id>
        <label>COPS4</label>
    </interactant>
    <organismsDiffer>false</organismsDiffer>
    <experiments>4</experiments>
</comment>
<comment type="interaction">
    <interactant intactId="EBI-306838">
        <id>Q15831</id>
    </interactant>
    <interactant intactId="EBI-306914">
        <id>Q13451</id>
        <label>FKBP5</label>
    </interactant>
    <organismsDiffer>false</organismsDiffer>
    <experiments>10</experiments>
</comment>
<comment type="interaction">
    <interactant intactId="EBI-306838">
        <id>Q15831</id>
    </interactant>
    <interactant intactId="EBI-296047">
        <id>P07900</id>
        <label>HSP90AA1</label>
    </interactant>
    <organismsDiffer>false</organismsDiffer>
    <experiments>6</experiments>
</comment>
<comment type="interaction">
    <interactant intactId="EBI-306838">
        <id>Q15831</id>
    </interactant>
    <interactant intactId="EBI-352572">
        <id>P08238</id>
        <label>HSP90AB1</label>
    </interactant>
    <organismsDiffer>false</organismsDiffer>
    <experiments>8</experiments>
</comment>
<comment type="interaction">
    <interactant intactId="EBI-306838">
        <id>Q15831</id>
    </interactant>
    <interactant intactId="EBI-444209">
        <id>O95835</id>
        <label>LATS1</label>
    </interactant>
    <organismsDiffer>false</organismsDiffer>
    <experiments>2</experiments>
</comment>
<comment type="interaction">
    <interactant intactId="EBI-306838">
        <id>Q15831</id>
    </interactant>
    <interactant intactId="EBI-302319">
        <id>Q96L34</id>
        <label>MARK4</label>
    </interactant>
    <organismsDiffer>false</organismsDiffer>
    <experiments>2</experiments>
</comment>
<comment type="interaction">
    <interactant intactId="EBI-306838">
        <id>Q15831</id>
    </interactant>
    <interactant intactId="EBI-6929133">
        <id>P26927</id>
        <label>MST1</label>
    </interactant>
    <organismsDiffer>false</organismsDiffer>
    <experiments>2</experiments>
</comment>
<comment type="interaction">
    <interactant intactId="EBI-306838">
        <id>Q15831</id>
    </interactant>
    <interactant intactId="EBI-1383852">
        <id>P54646</id>
        <label>PRKAA2</label>
    </interactant>
    <organismsDiffer>false</organismsDiffer>
    <experiments>3</experiments>
</comment>
<comment type="interaction">
    <interactant intactId="EBI-306838">
        <id>Q15831</id>
    </interactant>
    <interactant intactId="EBI-1109114">
        <id>Q7RTN6</id>
        <label>STRADA</label>
    </interactant>
    <organismsDiffer>false</organismsDiffer>
    <experiments>20</experiments>
</comment>
<comment type="interaction">
    <interactant intactId="EBI-306838">
        <id>Q15831</id>
    </interactant>
    <interactant intactId="EBI-15787241">
        <id>Q7RTN6-1</id>
        <label>STRADA</label>
    </interactant>
    <organismsDiffer>false</organismsDiffer>
    <experiments>3</experiments>
</comment>
<comment type="interaction">
    <interactant intactId="EBI-306838">
        <id>Q15831</id>
    </interactant>
    <interactant intactId="EBI-306893">
        <id>Q9C0K7</id>
        <label>STRADB</label>
    </interactant>
    <organismsDiffer>false</organismsDiffer>
    <experiments>13</experiments>
</comment>
<comment type="interaction">
    <interactant intactId="EBI-306838">
        <id>Q15831</id>
    </interactant>
    <interactant intactId="EBI-359372">
        <id>Q8NFZ5</id>
        <label>TNIP2</label>
    </interactant>
    <organismsDiffer>false</organismsDiffer>
    <experiments>5</experiments>
</comment>
<comment type="interaction">
    <interactant intactId="EBI-306838">
        <id>Q15831</id>
    </interactant>
    <interactant intactId="EBI-1568315">
        <id>Q9NNW5</id>
        <label>WDR6</label>
    </interactant>
    <organismsDiffer>false</organismsDiffer>
    <experiments>3</experiments>
</comment>
<comment type="interaction">
    <interactant intactId="EBI-306838">
        <id>Q15831</id>
    </interactant>
    <interactant intactId="EBI-347088">
        <id>P63104</id>
        <label>YWHAZ</label>
    </interactant>
    <organismsDiffer>false</organismsDiffer>
    <experiments>6</experiments>
</comment>
<comment type="subcellular location">
    <subcellularLocation>
        <location>Nucleus</location>
    </subcellularLocation>
    <subcellularLocation>
        <location>Cytoplasm</location>
    </subcellularLocation>
    <subcellularLocation>
        <location evidence="1">Membrane</location>
    </subcellularLocation>
    <subcellularLocation>
        <location>Mitochondrion</location>
    </subcellularLocation>
    <text evidence="1">A small fraction localizes at membranes (By similarity). Relocates to the cytoplasm when bound to STRAD (STRADA or STRADB) and CAB39/MO25 (CAB39/MO25alpha or CAB39L/MO25beta). Translocates to the mitochondrion during apoptosis. PTEN promotes cytoplasmic localization.</text>
</comment>
<comment type="subcellular location">
    <molecule>Isoform 2</molecule>
    <subcellularLocation>
        <location evidence="31">Nucleus</location>
    </subcellularLocation>
    <subcellularLocation>
        <location evidence="31">Cytoplasm</location>
    </subcellularLocation>
    <text>Predominantly nuclear, but translocates to the cytoplasm in response to metformin or peroxynitrite treatment.</text>
</comment>
<comment type="alternative products">
    <event type="alternative splicing"/>
    <isoform>
        <id>Q15831-1</id>
        <name>1</name>
        <name>LKB1(L)</name>
        <sequence type="displayed"/>
    </isoform>
    <isoform>
        <id>Q15831-2</id>
        <name>2</name>
        <name>LKB1(S)</name>
        <sequence type="described" ref="VSP_041746"/>
    </isoform>
</comment>
<comment type="tissue specificity">
    <text>Ubiquitously expressed. Strongest expression in testis and fetal liver.</text>
</comment>
<comment type="PTM">
    <text evidence="2 10 14 25">Phosphorylated by ATM at Thr-363 following ionizing radiation (IR). Phosphorylation at Ser-428 by RPS6KA1 and/or some PKA is required to inhibit cell growth. Phosphorylation at Ser-428 is also required during neuronal polarization to mediate phosphorylation of BRSK1 and BRSK2 (By similarity). Phosphorylation by PKC/PRKCZ at Ser-399 in isoform 2 promotes metformin (or peroxynitrite)-induced nuclear export of STK11 and activation of AMPK. UV radiation-induced phosphorylation at Thr-363 mediates CDKN1A degradation (By similarity).</text>
</comment>
<comment type="PTM">
    <text evidence="24">Acetylated. Deacetylation at Lys-48 enhances cytoplasmic localization and kinase activity in vitro.</text>
</comment>
<comment type="disease" evidence="8 12 19 28 33 34 38 40">
    <disease id="DI-00923">
        <name>Peutz-Jeghers syndrome</name>
        <acronym>PJS</acronym>
        <description>An autosomal dominant disorder characterized by melanocytic macules of the lips, multiple gastrointestinal hamartomatous polyps and an increased risk for various neoplasms, including gastrointestinal cancer.</description>
        <dbReference type="MIM" id="175200"/>
    </disease>
    <text>The disease is caused by variants affecting the gene represented in this entry.</text>
</comment>
<comment type="disease" evidence="35 41">
    <disease id="DI-02749">
        <name>Testicular germ cell tumor</name>
        <acronym>TGCT</acronym>
        <description>A common malignancy in males representing 95% of all testicular neoplasms. TGCTs have various pathologic subtypes including: unclassified intratubular germ cell neoplasia, seminoma (including cases with syncytiotrophoblastic cells), spermatocytic seminoma, embryonal carcinoma, yolk sac tumor, choriocarcinoma, and teratoma.</description>
        <dbReference type="MIM" id="273300"/>
    </disease>
    <text>The gene represented in this entry may be involved in disease pathogenesis.</text>
</comment>
<comment type="disease">
    <text>Defects in STK11 are associated with some sporadic cancers, especially lung cancers. Frequently mutated and inactivated in non-small cell lung cancer (NSCLC). Defects promote lung cancerigenesis process, especially lung cancer progression and metastasis. Confers lung adenocarcinoma the ability to trans-differentiate into squamous cell carcinoma. Also able to promote lung cancer metastasis, via both cancer-cell autonomous and non-cancer-cell autonomous mechanisms.</text>
</comment>
<comment type="similarity">
    <text evidence="42">Belongs to the protein kinase superfamily. CAMK Ser/Thr protein kinase family. LKB1 subfamily.</text>
</comment>
<comment type="caution">
    <text evidence="23 25 31 43">Its phosphorylation by PKC/PRKCZ at Ser-428 is reported to promote peroxynitrite-induced nuclear export of STK11, leading to PTEN activation and subsequent inhibition of PI3K/AKT signaling and induction of apoptosis in vein endothelial cells (PubMed:18321849). However this paper was withdrawn by the authors due to concerns of image duplication in the figures. Its phosphorylation by PKC/PRKCZ has been confirmed in other studies (PubMed:18854309, PubMed:23612973).</text>
</comment>
<comment type="online information" name="Atlas of Genetics and Cytogenetics in Oncology and Haematology">
    <link uri="https://atlasgeneticsoncology.org/gene/292/STK11"/>
</comment>
<comment type="online information" name="Wikipedia">
    <link uri="https://en.wikipedia.org/wiki/PJS"/>
    <text>PJS entry</text>
</comment>
<sequence length="433" mass="48636">MEVVDPQQLGMFTEGELMSVGMDTFIHRIDSTEVIYQPRRKRAKLIGKYLMGDLLGEGSYGKVKEVLDSETLCRRAVKILKKKKLRRIPNGEANVKKEIQLLRRLRHKNVIQLVDVLYNEEKQKMYMVMEYCVCGMQEMLDSVPEKRFPVCQAHGYFCQLIDGLEYLHSQGIVHKDIKPGNLLLTTGGTLKISDLGVAEALHPFAADDTCRTSQGSPAFQPPEIANGLDTFSGFKVDIWSAGVTLYNITTGLYPFEGDNIYKLFENIGKGSYAIPGDCGPPLSDLLKGMLEYEPAKRFSIRQIRQHSWFRKKHPPAEAPVPIPPSPDTKDRWRSMTVVPYLEDLHGADEDEDLFDIEDDIIYTQDFTVPGQVPEEEASHNGQRRGLPKAVCMNGTEAAQLSTKSRAEGRAPNPARKACSASSKIRRLSACKQQ</sequence>
<protein>
    <recommendedName>
        <fullName evidence="42">Serine/threonine-protein kinase STK11</fullName>
        <ecNumber evidence="16">2.7.11.1</ecNumber>
    </recommendedName>
    <alternativeName>
        <fullName>Liver kinase B1</fullName>
        <shortName>LKB1</shortName>
        <shortName>hLKB1</shortName>
    </alternativeName>
    <alternativeName>
        <fullName>Renal carcinoma antigen NY-REN-19</fullName>
    </alternativeName>
</protein>
<name>STK11_HUMAN</name>
<feature type="chain" id="PRO_0000086699" description="Serine/threonine-protein kinase STK11">
    <location>
        <begin position="1"/>
        <end position="430"/>
    </location>
</feature>
<feature type="propeptide" id="PRO_0000422300" description="Removed in mature form" evidence="1">
    <location>
        <begin position="431"/>
        <end position="433"/>
    </location>
</feature>
<feature type="domain" description="Protein kinase" evidence="3">
    <location>
        <begin position="49"/>
        <end position="309"/>
    </location>
</feature>
<feature type="region of interest" description="Sufficient for interaction with SIRT1" evidence="24">
    <location>
        <begin position="45"/>
        <end position="90"/>
    </location>
</feature>
<feature type="region of interest" description="Disordered" evidence="4">
    <location>
        <begin position="312"/>
        <end position="331"/>
    </location>
</feature>
<feature type="region of interest" description="Disordered" evidence="4">
    <location>
        <begin position="397"/>
        <end position="433"/>
    </location>
</feature>
<feature type="compositionally biased region" description="Pro residues" evidence="4">
    <location>
        <begin position="316"/>
        <end position="326"/>
    </location>
</feature>
<feature type="compositionally biased region" description="Basic residues" evidence="4">
    <location>
        <begin position="423"/>
        <end position="433"/>
    </location>
</feature>
<feature type="active site" description="Proton acceptor">
    <location>
        <position position="176"/>
    </location>
</feature>
<feature type="binding site" evidence="3">
    <location>
        <begin position="55"/>
        <end position="63"/>
    </location>
    <ligand>
        <name>ATP</name>
        <dbReference type="ChEBI" id="CHEBI:30616"/>
    </ligand>
</feature>
<feature type="binding site" evidence="42">
    <location>
        <position position="78"/>
    </location>
    <ligand>
        <name>ATP</name>
        <dbReference type="ChEBI" id="CHEBI:30616"/>
    </ligand>
</feature>
<feature type="modified residue" description="Phosphoserine" evidence="45">
    <location>
        <position position="31"/>
    </location>
</feature>
<feature type="modified residue" description="N6-acetyllysine" evidence="24">
    <location>
        <position position="44"/>
    </location>
</feature>
<feature type="modified residue" description="N6-acetyllysine" evidence="24">
    <location>
        <position position="48"/>
    </location>
</feature>
<feature type="modified residue" description="N6-acetyllysine" evidence="24">
    <location>
        <position position="96"/>
    </location>
</feature>
<feature type="modified residue" description="N6-acetyllysine" evidence="24">
    <location>
        <position position="97"/>
    </location>
</feature>
<feature type="modified residue" description="Phosphothreonine; by autocatalysis" evidence="10">
    <location>
        <position position="189"/>
    </location>
</feature>
<feature type="modified residue" description="N6-acetyllysine" evidence="24">
    <location>
        <position position="296"/>
    </location>
</feature>
<feature type="modified residue" description="N6-acetyllysine" evidence="24">
    <location>
        <position position="311"/>
    </location>
</feature>
<feature type="modified residue" description="Phosphoserine" evidence="2">
    <location>
        <position position="325"/>
    </location>
</feature>
<feature type="modified residue" description="Phosphothreonine; by autocatalysis" evidence="14">
    <location>
        <position position="336"/>
    </location>
</feature>
<feature type="modified residue" description="Phosphothreonine; by ATM and autocatalysis" evidence="14">
    <location>
        <position position="363"/>
    </location>
</feature>
<feature type="modified residue" description="Phosphoserine" evidence="45">
    <location>
        <position position="401"/>
    </location>
</feature>
<feature type="modified residue" description="N6-acetyllysine" evidence="24">
    <location>
        <position position="416"/>
    </location>
</feature>
<feature type="modified residue" description="N6-acetyllysine" evidence="24">
    <location>
        <position position="423"/>
    </location>
</feature>
<feature type="modified residue" description="Phosphoserine; by autocatalysis, PKA, PKC/PRKCZ and RPS6KA1" evidence="25">
    <location>
        <position position="428"/>
    </location>
</feature>
<feature type="modified residue" description="Cysteine methyl ester" evidence="1">
    <location>
        <position position="430"/>
    </location>
</feature>
<feature type="modified residue" description="N6-acetyllysine" evidence="24">
    <location>
        <position position="431"/>
    </location>
</feature>
<feature type="lipid moiety-binding region" description="S-palmitoyl cysteine" evidence="1">
    <location>
        <position position="418"/>
    </location>
</feature>
<feature type="lipid moiety-binding region" description="S-farnesyl cysteine" evidence="1">
    <location>
        <position position="430"/>
    </location>
</feature>
<feature type="splice variant" id="VSP_041746" description="In isoform 2." evidence="42">
    <original>QVPEEEASHNGQRRGLPKAVCMNGTEAAQLSTKSRAEGRAPNPARKACSASSKIRRLSACKQQ</original>
    <variation>GEEASEAGLRAERGLQKSEGSDLSGEEASRPAPQ</variation>
    <location>
        <begin position="371"/>
        <end position="433"/>
    </location>
</feature>
<feature type="sequence variant" id="VAR_065627" description="In cervical cancer; somatic mutation; dbSNP:rs2145404557." evidence="13">
    <original>E</original>
    <variation>K</variation>
    <location>
        <position position="14"/>
    </location>
</feature>
<feature type="sequence variant" id="VAR_065628" description="In PJS; dbSNP:rs2145404592." evidence="28">
    <original>E</original>
    <variation>G</variation>
    <location>
        <position position="16"/>
    </location>
</feature>
<feature type="sequence variant" id="VAR_033138" description="In melanoma; sporadic malignant; somatic mutation; dbSNP:rs137853080." evidence="6">
    <original>Y</original>
    <variation>D</variation>
    <location>
        <position position="49"/>
    </location>
</feature>
<feature type="sequence variant" id="VAR_071057" description="In PJS." evidence="40">
    <location>
        <begin position="50"/>
        <end position="53"/>
    </location>
</feature>
<feature type="sequence variant" id="VAR_065629" description="In cervical carcinoma; somatic mutation; dbSNP:rs1599915144." evidence="13 26">
    <original>V</original>
    <variation>M</variation>
    <location>
        <position position="66"/>
    </location>
</feature>
<feature type="sequence variant" id="VAR_006202" description="In PJS; abolishes kinase activity, leading to loss of autophosphorylation; dbSNP:rs137853077." evidence="34 40">
    <original>L</original>
    <variation>P</variation>
    <location>
        <position position="67"/>
    </location>
</feature>
<feature type="sequence variant" id="VAR_065630" description="In sporadic cancer; somatic mutation; no effect on kinase activity nor in heterotrimeric complex assembly with STRADA and CAB39; dbSNP:rs1057520039." evidence="26">
    <original>R</original>
    <variation>G</variation>
    <location>
        <position position="86"/>
    </location>
</feature>
<feature type="sequence variant" id="VAR_041139" description="In a metastatic melanoma sample; somatic mutation; dbSNP:rs1568690463." evidence="22">
    <original>R</original>
    <variation>K</variation>
    <location>
        <position position="87"/>
    </location>
</feature>
<feature type="sequence variant" id="VAR_065631" description="In sporadic cancer; somatic mutation; no effect on kinase activity nor in heterotrimeric complex assembly with STRADA and CAB39; dbSNP:rs764449808." evidence="26">
    <original>Q</original>
    <variation>R</variation>
    <location>
        <position position="123"/>
    </location>
</feature>
<feature type="sequence variant" id="VAR_033139" description="In melanoma; sporadic malignant; somatic mutation; dbSNP:rs137853081." evidence="6">
    <original>G</original>
    <variation>R</variation>
    <location>
        <position position="135"/>
    </location>
</feature>
<feature type="sequence variant" id="VAR_065632" description="In sporadic cancer; somatic mutation; impairs heterotrimeric complex assembly with STRADA and CAB39; dbSNP:rs2145424124." evidence="26">
    <original>F</original>
    <variation>S</variation>
    <location>
        <position position="157"/>
    </location>
</feature>
<feature type="sequence variant" id="VAR_065633" description="In cervical cancer; somatic mutation; dbSNP:rs2145424155." evidence="13">
    <original>L</original>
    <variation>P</variation>
    <location>
        <position position="160"/>
    </location>
</feature>
<feature type="sequence variant" id="VAR_007920" description="In PJS." evidence="8">
    <original>DGL</original>
    <variation>NDM</variation>
    <location>
        <begin position="162"/>
        <end position="164"/>
    </location>
</feature>
<feature type="sequence variant" id="VAR_033140" description="In TGCT; a tumor with seminoma and teratoma components; somatic mutation; severely impaired but detectable kinase activity; impairs heterotrimeric complex assembly with STRADA and CAB39; predominantly nuclear localization; dbSNP:rs137853078." evidence="26 35 41">
    <original>G</original>
    <variation>D</variation>
    <location>
        <position position="163"/>
    </location>
</feature>
<feature type="sequence variant" id="VAR_065634" description="In sporadic cancer; somatic mutation; impairs heterotrimeric complex assembly with STRADA and CAB39; dbSNP:rs876659972." evidence="26">
    <original>Q</original>
    <variation>P</variation>
    <location>
        <position position="170"/>
    </location>
</feature>
<feature type="sequence variant" id="VAR_065635" description="In colorectal cancer; somatic mutation; impairs heterotrimeric complex assembly with STRADA and CAB39; dbSNP:rs1599926499." evidence="26 37">
    <original>G</original>
    <variation>S</variation>
    <location>
        <position position="171"/>
    </location>
</feature>
<feature type="sequence variant" id="VAR_065636" description="In sporadic cancer; somatic mutation; impairs heterotrimeric complex assembly with STRADA and CAB39." evidence="26">
    <original>H</original>
    <variation>R</variation>
    <location>
        <position position="174"/>
    </location>
</feature>
<feature type="sequence variant" id="VAR_071058" description="In PJS; loss of kinase activity, leading to greatly reduced autophosphorylation; fails to phosphorylate PTEN in vitro; no significant effect on nucleocytoplasmic localization; dbSNP:rs730881979." evidence="19 40">
    <original>D</original>
    <variation>N</variation>
    <location>
        <position position="176"/>
    </location>
</feature>
<feature type="sequence variant" id="VAR_065637" description="In sporadic cancer; somatic mutation; Loss of kinase activity." evidence="14 26">
    <original>D</original>
    <variation>Y</variation>
    <location>
        <position position="176"/>
    </location>
</feature>
<feature type="sequence variant" id="VAR_065638" description="In sporadic cancer; somatic mutation; impairs heterotrimeric complex assembly with STRADA and CAB39; dbSNP:rs1057520041." evidence="26">
    <original>I</original>
    <variation>N</variation>
    <location>
        <position position="177"/>
    </location>
</feature>
<feature type="sequence variant" id="VAR_065639" description="In sporadic cancer; somatic mutation; impairs heterotrimeric complex assembly with STRADA and CAB39; requires 2 nucleotide substitutions; dbSNP:rs1568707668." evidence="26">
    <original>N</original>
    <variation>E</variation>
    <location>
        <position position="181"/>
    </location>
</feature>
<feature type="sequence variant" id="VAR_007921" description="In PJS; dbSNP:rs121913315." evidence="8">
    <original>D</original>
    <variation>N</variation>
    <location>
        <position position="194"/>
    </location>
</feature>
<feature type="sequence variant" id="VAR_065640" description="In lung cancer; somatic mutation; dbSNP:rs121913316." evidence="5">
    <original>D</original>
    <variation>V</variation>
    <location>
        <position position="194"/>
    </location>
</feature>
<feature type="sequence variant" id="VAR_033141" description="In melanoma; sporadic malignant; somatic mutation; dbSNP:rs121913315." evidence="7">
    <original>D</original>
    <variation>Y</variation>
    <location>
        <position position="194"/>
    </location>
</feature>
<feature type="sequence variant" id="VAR_065641" description="In colorectal cancer; somatic mutation; impaired kinase activity; dbSNP:rs121913317." evidence="37">
    <original>E</original>
    <variation>K</variation>
    <location>
        <position position="199"/>
    </location>
</feature>
<feature type="sequence variant" id="VAR_065642" description="In sporadic cancer; somatic mutation; does not affect kinase activity; dbSNP:rs121913317." evidence="26">
    <original>E</original>
    <variation>Q</variation>
    <location>
        <position position="199"/>
    </location>
</feature>
<feature type="sequence variant" id="VAR_065643" description="In sporadic cancer; somatic mutation; no effect heterotrimeric complex assembly with STRADA and CAB39; dbSNP:rs730881981." evidence="26">
    <original>A</original>
    <variation>T</variation>
    <location>
        <position position="205"/>
    </location>
</feature>
<feature type="sequence variant" id="VAR_065644" description="In colorectal cancer; somatic mutation; no effect heterotrimeric complex assembly with STRADA and CAB39; dbSNP:rs1555738372." evidence="37">
    <original>D</original>
    <variation>N</variation>
    <location>
        <position position="208"/>
    </location>
</feature>
<feature type="sequence variant" id="VAR_065645" description="In colorectal cancer; somatic mutation; dbSNP:rs1057520038." evidence="37">
    <original>G</original>
    <variation>D</variation>
    <location>
        <position position="215"/>
    </location>
</feature>
<feature type="sequence variant" id="VAR_065646" description="In sporadic cancer; somatic mutation; impairs heterotrimeric complex assembly with STRADA and CAB39; dbSNP:rs1057520017." evidence="26">
    <original>S</original>
    <variation>F</variation>
    <location>
        <position position="216"/>
    </location>
</feature>
<feature type="sequence variant" id="VAR_065647" description="In sporadic cancer; somatic mutation; impairs heterotrimeric complex assembly with STRADA and CAB39; dbSNP:rs2080776621." evidence="26">
    <original>E</original>
    <variation>V</variation>
    <location>
        <position position="223"/>
    </location>
</feature>
<feature type="sequence variant" id="VAR_065648" description="In sporadic cancer; somatic mutation; no effect heterotrimeric complex assembly with STRADA and CAB39; dbSNP:rs2145425367." evidence="26">
    <original>T</original>
    <variation>P</variation>
    <location>
        <position position="230"/>
    </location>
</feature>
<feature type="sequence variant" id="VAR_065649" description="In cervical cancer; somatic mutation; dbSNP:rs929783669." evidence="13">
    <original>F</original>
    <variation>L</variation>
    <location>
        <position position="231"/>
    </location>
</feature>
<feature type="sequence variant" id="VAR_065650" description="In sporadic cancer; somatic mutation; no effect heterotrimeric complex assembly with STRADA and CAB39; dbSNP:rs2145425398." evidence="26">
    <original>S</original>
    <variation>P</variation>
    <location>
        <position position="232"/>
    </location>
</feature>
<feature type="sequence variant" id="VAR_033142" description="In PJS; late onset suggests reduced penetrance; dbSNP:rs137853082." evidence="12">
    <original>W</original>
    <variation>C</variation>
    <location>
        <position position="239"/>
    </location>
</feature>
<feature type="sequence variant" id="VAR_065651" description="In sporadic cancer; somatic mutation; impairs heterotrimeric complex assembly with STRADA and CAB39." evidence="26">
    <original>L</original>
    <variation>R</variation>
    <location>
        <position position="245"/>
    </location>
</feature>
<feature type="sequence variant" id="VAR_006203" description="In PJS." evidence="38">
    <location>
        <position position="247"/>
    </location>
</feature>
<feature type="sequence variant" id="VAR_065652" description="In sporadic cancer; somatic mutation; impairs heterotrimeric complex assembly with STRADA and CAB39; dbSNP:rs1568709142." evidence="26">
    <original>T</original>
    <variation>P</variation>
    <location>
        <position position="250"/>
    </location>
</feature>
<feature type="sequence variant" id="VAR_065653" description="In sporadic cancer; somatic mutation; no effect on kinase activity nor in heterotrimeric complex assembly with STRADA and CAB39; dbSNP:rs2145427076." evidence="26">
    <original>Y</original>
    <variation>H</variation>
    <location>
        <position position="272"/>
    </location>
</feature>
<feature type="sequence variant" id="VAR_065654" description="In sporadic cancer; somatic mutation; no effect on kinase activity nor in heterotrimeric complex assembly with STRADA and CAB39; dbSNP:rs1555738692." evidence="26">
    <original>D</original>
    <variation>Y</variation>
    <location>
        <position position="277"/>
    </location>
</feature>
<feature type="sequence variant" id="VAR_065655" description="In ovarian carcinoma; somatic mutation; dbSNP:rs121913322." evidence="9">
    <original>P</original>
    <variation>L</variation>
    <location>
        <position position="281"/>
    </location>
</feature>
<feature type="sequence variant" id="VAR_065656" description="In sporadic cancer; somatic mutation; impairs heterotrimeric complex assembly with STRADA and CAB39; dbSNP:rs1555738724." evidence="26">
    <original>L</original>
    <variation>Q</variation>
    <location>
        <position position="285"/>
    </location>
</feature>
<feature type="sequence variant" id="VAR_007922" description="In PJS; dbSNP:rs1568710381." evidence="8">
    <original>R</original>
    <variation>K</variation>
    <location>
        <position position="297"/>
    </location>
</feature>
<feature type="sequence variant" id="VAR_033143" description="In PJS.">
    <original>IRQH</original>
    <variation>N</variation>
    <location>
        <begin position="303"/>
        <end position="306"/>
    </location>
</feature>
<feature type="sequence variant" id="VAR_071059" description="In PJS; abolishes kinase activity, leading to loss of autophosphorylation; dbSNP:rs1057520042." evidence="40">
    <original>W</original>
    <variation>C</variation>
    <location>
        <position position="308"/>
    </location>
</feature>
<feature type="sequence variant" id="VAR_065657" description="In colorectal cancer; no effect heterotrimeric complex assembly with STRADA and CAB39; dbSNP:rs1064795752." evidence="39">
    <original>P</original>
    <variation>H</variation>
    <location>
        <position position="314"/>
    </location>
</feature>
<feature type="sequence variant" id="VAR_033144" description="In PJS; uncertain significance; no effect heterotrimeric complex assembly with STRADA and CAB39; dbSNP:rs786202431." evidence="12 26">
    <original>P</original>
    <variation>S</variation>
    <location>
        <position position="315"/>
    </location>
</feature>
<feature type="sequence variant" id="VAR_065658" description="In gastric carcinoma; no effect heterotrimeric complex assembly with STRADA and CAB39; dbSNP:rs367807476." evidence="36">
    <original>P</original>
    <variation>L</variation>
    <location>
        <position position="324"/>
    </location>
</feature>
<feature type="sequence variant" id="VAR_065659" description="In colorectal cancer; somatic mutation; dbSNP:rs59912467." evidence="37">
    <original>F</original>
    <variation>L</variation>
    <location>
        <position position="354"/>
    </location>
</feature>
<feature type="sequence variant" id="VAR_065660" description="In colorectal cancer; somatic mutation; dbSNP:rs587782835." evidence="37">
    <original>T</original>
    <variation>M</variation>
    <location>
        <position position="367"/>
    </location>
</feature>
<feature type="mutagenesis site" description="No effect on kinase activity." evidence="24">
    <original>K</original>
    <variation>R</variation>
    <location>
        <position position="44"/>
    </location>
</feature>
<feature type="mutagenesis site" description="No effect on basal nucleocytoplasmic localization, but fails to translocate to the cytoplasm when coexpressed with SIRT1." evidence="24">
    <original>K</original>
    <variation>Q</variation>
    <location>
        <position position="48"/>
    </location>
</feature>
<feature type="mutagenesis site" description="Enhanced phosphorylation at Thr-336 and Ser-428, enhanced cytoplasmic localization and increased kinase activity." evidence="24">
    <original>K</original>
    <variation>R</variation>
    <location>
        <position position="48"/>
    </location>
</feature>
<feature type="mutagenesis site" description="Impaired formation of a heterotrimeric complex with STRADA and CAB39; when associated with A-204." evidence="26">
    <original>R</original>
    <variation>A</variation>
    <location>
        <position position="74"/>
    </location>
</feature>
<feature type="mutagenesis site" description="Loss of kinase activity, leading to greatly reduced autophosphorylation." evidence="10 40">
    <original>K</original>
    <variation>I</variation>
    <location>
        <position position="78"/>
    </location>
</feature>
<feature type="mutagenesis site" description="Loss of kinase activity, leading to reduced autophosphorylation and acting as a dominant-negative mutant." evidence="10 40">
    <original>K</original>
    <variation>M</variation>
    <location>
        <position position="78"/>
    </location>
</feature>
<feature type="mutagenesis site" description="No effect on kinase activity." evidence="24">
    <original>K</original>
    <variation>R</variation>
    <location>
        <position position="96"/>
    </location>
</feature>
<feature type="mutagenesis site" description="No effect on kinase activity." evidence="24">
    <original>K</original>
    <variation>R</variation>
    <location>
        <position position="97"/>
    </location>
</feature>
<feature type="mutagenesis site" description="Reduced phosphorylation." evidence="10">
    <original>T</original>
    <variation>A</variation>
    <location>
        <position position="189"/>
    </location>
</feature>
<feature type="mutagenesis site" description="Loss of kinase activity." evidence="15 16 26">
    <original>D</original>
    <variation>A</variation>
    <location>
        <position position="194"/>
    </location>
</feature>
<feature type="mutagenesis site" description="No effect. Impaired formation of a heterotrimeric complex with STRADA and CAB39; when associated with A-74." evidence="26">
    <original>F</original>
    <variation>A</variation>
    <location>
        <position position="204"/>
    </location>
</feature>
<feature type="mutagenesis site" description="No effect on kinase activity." evidence="25">
    <original>S</original>
    <variation>A</variation>
    <variation>E</variation>
    <location>
        <position position="428"/>
    </location>
</feature>
<feature type="strand" evidence="46">
    <location>
        <begin position="54"/>
        <end position="57"/>
    </location>
</feature>
<feature type="strand" evidence="46">
    <location>
        <begin position="62"/>
        <end position="68"/>
    </location>
</feature>
<feature type="turn" evidence="46">
    <location>
        <begin position="69"/>
        <end position="71"/>
    </location>
</feature>
<feature type="strand" evidence="46">
    <location>
        <begin position="74"/>
        <end position="80"/>
    </location>
</feature>
<feature type="helix" evidence="46">
    <location>
        <begin position="82"/>
        <end position="87"/>
    </location>
</feature>
<feature type="helix" evidence="46">
    <location>
        <begin position="91"/>
        <end position="102"/>
    </location>
</feature>
<feature type="strand" evidence="46">
    <location>
        <begin position="113"/>
        <end position="118"/>
    </location>
</feature>
<feature type="turn" evidence="48">
    <location>
        <begin position="120"/>
        <end position="123"/>
    </location>
</feature>
<feature type="strand" evidence="46">
    <location>
        <begin position="125"/>
        <end position="130"/>
    </location>
</feature>
<feature type="strand" evidence="46">
    <location>
        <begin position="133"/>
        <end position="135"/>
    </location>
</feature>
<feature type="helix" evidence="46">
    <location>
        <begin position="136"/>
        <end position="142"/>
    </location>
</feature>
<feature type="helix" evidence="46">
    <location>
        <begin position="150"/>
        <end position="169"/>
    </location>
</feature>
<feature type="helix" evidence="46">
    <location>
        <begin position="179"/>
        <end position="181"/>
    </location>
</feature>
<feature type="strand" evidence="46">
    <location>
        <begin position="182"/>
        <end position="184"/>
    </location>
</feature>
<feature type="strand" evidence="46">
    <location>
        <begin position="190"/>
        <end position="192"/>
    </location>
</feature>
<feature type="helix" evidence="48">
    <location>
        <begin position="195"/>
        <end position="197"/>
    </location>
</feature>
<feature type="helix" evidence="46">
    <location>
        <begin position="217"/>
        <end position="219"/>
    </location>
</feature>
<feature type="helix" evidence="46">
    <location>
        <begin position="222"/>
        <end position="225"/>
    </location>
</feature>
<feature type="strand" evidence="46">
    <location>
        <begin position="231"/>
        <end position="233"/>
    </location>
</feature>
<feature type="helix" evidence="46">
    <location>
        <begin position="234"/>
        <end position="250"/>
    </location>
</feature>
<feature type="helix" evidence="46">
    <location>
        <begin position="260"/>
        <end position="269"/>
    </location>
</feature>
<feature type="strand" evidence="46">
    <location>
        <begin position="276"/>
        <end position="278"/>
    </location>
</feature>
<feature type="helix" evidence="46">
    <location>
        <begin position="280"/>
        <end position="289"/>
    </location>
</feature>
<feature type="turn" evidence="46">
    <location>
        <begin position="294"/>
        <end position="296"/>
    </location>
</feature>
<feature type="helix" evidence="46">
    <location>
        <begin position="300"/>
        <end position="305"/>
    </location>
</feature>
<feature type="helix" evidence="46">
    <location>
        <begin position="307"/>
        <end position="310"/>
    </location>
</feature>
<feature type="turn" evidence="48">
    <location>
        <begin position="326"/>
        <end position="328"/>
    </location>
</feature>
<feature type="helix" evidence="47">
    <location>
        <begin position="334"/>
        <end position="336"/>
    </location>
</feature>
<feature type="helix" evidence="46">
    <location>
        <begin position="339"/>
        <end position="341"/>
    </location>
</feature>
<feature type="modified residue" description="Phosphoserine" evidence="31">
    <location sequence="Q15831-2">
        <position position="399"/>
    </location>
</feature>
<evidence type="ECO:0000250" key="1"/>
<evidence type="ECO:0000250" key="2">
    <source>
        <dbReference type="UniProtKB" id="Q9WTK7"/>
    </source>
</evidence>
<evidence type="ECO:0000255" key="3">
    <source>
        <dbReference type="PROSITE-ProRule" id="PRU00159"/>
    </source>
</evidence>
<evidence type="ECO:0000256" key="4">
    <source>
        <dbReference type="SAM" id="MobiDB-lite"/>
    </source>
</evidence>
<evidence type="ECO:0000269" key="5">
    <source>
    </source>
</evidence>
<evidence type="ECO:0000269" key="6">
    <source>
    </source>
</evidence>
<evidence type="ECO:0000269" key="7">
    <source>
    </source>
</evidence>
<evidence type="ECO:0000269" key="8">
    <source>
    </source>
</evidence>
<evidence type="ECO:0000269" key="9">
    <source>
    </source>
</evidence>
<evidence type="ECO:0000269" key="10">
    <source>
    </source>
</evidence>
<evidence type="ECO:0000269" key="11">
    <source>
    </source>
</evidence>
<evidence type="ECO:0000269" key="12">
    <source>
    </source>
</evidence>
<evidence type="ECO:0000269" key="13">
    <source>
    </source>
</evidence>
<evidence type="ECO:0000269" key="14">
    <source>
    </source>
</evidence>
<evidence type="ECO:0000269" key="15">
    <source>
    </source>
</evidence>
<evidence type="ECO:0000269" key="16">
    <source>
    </source>
</evidence>
<evidence type="ECO:0000269" key="17">
    <source>
    </source>
</evidence>
<evidence type="ECO:0000269" key="18">
    <source>
    </source>
</evidence>
<evidence type="ECO:0000269" key="19">
    <source>
    </source>
</evidence>
<evidence type="ECO:0000269" key="20">
    <source>
    </source>
</evidence>
<evidence type="ECO:0000269" key="21">
    <source>
    </source>
</evidence>
<evidence type="ECO:0000269" key="22">
    <source>
    </source>
</evidence>
<evidence type="ECO:0000269" key="23">
    <source>
    </source>
</evidence>
<evidence type="ECO:0000269" key="24">
    <source>
    </source>
</evidence>
<evidence type="ECO:0000269" key="25">
    <source>
    </source>
</evidence>
<evidence type="ECO:0000269" key="26">
    <source>
    </source>
</evidence>
<evidence type="ECO:0000269" key="27">
    <source>
    </source>
</evidence>
<evidence type="ECO:0000269" key="28">
    <source>
    </source>
</evidence>
<evidence type="ECO:0000269" key="29">
    <source>
    </source>
</evidence>
<evidence type="ECO:0000269" key="30">
    <source>
    </source>
</evidence>
<evidence type="ECO:0000269" key="31">
    <source>
    </source>
</evidence>
<evidence type="ECO:0000269" key="32">
    <source>
    </source>
</evidence>
<evidence type="ECO:0000269" key="33">
    <source>
    </source>
</evidence>
<evidence type="ECO:0000269" key="34">
    <source>
    </source>
</evidence>
<evidence type="ECO:0000269" key="35">
    <source>
    </source>
</evidence>
<evidence type="ECO:0000269" key="36">
    <source>
    </source>
</evidence>
<evidence type="ECO:0000269" key="37">
    <source>
    </source>
</evidence>
<evidence type="ECO:0000269" key="38">
    <source>
    </source>
</evidence>
<evidence type="ECO:0000269" key="39">
    <source>
    </source>
</evidence>
<evidence type="ECO:0000269" key="40">
    <source>
    </source>
</evidence>
<evidence type="ECO:0000269" key="41">
    <source>
    </source>
</evidence>
<evidence type="ECO:0000305" key="42"/>
<evidence type="ECO:0000305" key="43">
    <source>
    </source>
</evidence>
<evidence type="ECO:0000312" key="44">
    <source>
        <dbReference type="HGNC" id="HGNC:11389"/>
    </source>
</evidence>
<evidence type="ECO:0007744" key="45">
    <source>
    </source>
</evidence>
<evidence type="ECO:0007829" key="46">
    <source>
        <dbReference type="PDB" id="2WTK"/>
    </source>
</evidence>
<evidence type="ECO:0007829" key="47">
    <source>
        <dbReference type="PDB" id="4ZDR"/>
    </source>
</evidence>
<evidence type="ECO:0007829" key="48">
    <source>
        <dbReference type="PDB" id="8VSU"/>
    </source>
</evidence>
<gene>
    <name evidence="44" type="primary">STK11</name>
    <name type="synonym">LKB1</name>
    <name type="synonym">PJS</name>
</gene>
<reference key="1">
    <citation type="journal article" date="1998" name="Nat. Genet.">
        <title>Peutz-Jeghers syndrome is caused by mutations in a novel serine threonine kinase.</title>
        <authorList>
            <person name="Jenne D.E."/>
            <person name="Reimann H."/>
            <person name="Nezu J."/>
            <person name="Friedl W."/>
            <person name="Loff S."/>
            <person name="Jeschke R."/>
            <person name="Mueller O."/>
            <person name="Back W."/>
            <person name="Zimmer M."/>
        </authorList>
    </citation>
    <scope>NUCLEOTIDE SEQUENCE [MRNA]</scope>
    <scope>INVOLVEMENT IN PJS</scope>
    <source>
        <tissue>Liver</tissue>
    </source>
</reference>
<reference key="2">
    <citation type="journal article" date="1998" name="Cancer Res.">
        <title>Low frequency of somatic mutations in the LKB1/Peutz-Jeghers syndrome gene in sporadic breast cancer.</title>
        <authorList>
            <person name="Bignell G.R."/>
            <person name="Barfoot R."/>
            <person name="Seal S."/>
            <person name="Collins N."/>
            <person name="Warren W."/>
            <person name="Stratton M.R."/>
        </authorList>
    </citation>
    <scope>NUCLEOTIDE SEQUENCE [GENOMIC DNA]</scope>
</reference>
<reference key="3">
    <citation type="journal article" date="2004" name="Nat. Genet.">
        <title>Complete sequencing and characterization of 21,243 full-length human cDNAs.</title>
        <authorList>
            <person name="Ota T."/>
            <person name="Suzuki Y."/>
            <person name="Nishikawa T."/>
            <person name="Otsuki T."/>
            <person name="Sugiyama T."/>
            <person name="Irie R."/>
            <person name="Wakamatsu A."/>
            <person name="Hayashi K."/>
            <person name="Sato H."/>
            <person name="Nagai K."/>
            <person name="Kimura K."/>
            <person name="Makita H."/>
            <person name="Sekine M."/>
            <person name="Obayashi M."/>
            <person name="Nishi T."/>
            <person name="Shibahara T."/>
            <person name="Tanaka T."/>
            <person name="Ishii S."/>
            <person name="Yamamoto J."/>
            <person name="Saito K."/>
            <person name="Kawai Y."/>
            <person name="Isono Y."/>
            <person name="Nakamura Y."/>
            <person name="Nagahari K."/>
            <person name="Murakami K."/>
            <person name="Yasuda T."/>
            <person name="Iwayanagi T."/>
            <person name="Wagatsuma M."/>
            <person name="Shiratori A."/>
            <person name="Sudo H."/>
            <person name="Hosoiri T."/>
            <person name="Kaku Y."/>
            <person name="Kodaira H."/>
            <person name="Kondo H."/>
            <person name="Sugawara M."/>
            <person name="Takahashi M."/>
            <person name="Kanda K."/>
            <person name="Yokoi T."/>
            <person name="Furuya T."/>
            <person name="Kikkawa E."/>
            <person name="Omura Y."/>
            <person name="Abe K."/>
            <person name="Kamihara K."/>
            <person name="Katsuta N."/>
            <person name="Sato K."/>
            <person name="Tanikawa M."/>
            <person name="Yamazaki M."/>
            <person name="Ninomiya K."/>
            <person name="Ishibashi T."/>
            <person name="Yamashita H."/>
            <person name="Murakawa K."/>
            <person name="Fujimori K."/>
            <person name="Tanai H."/>
            <person name="Kimata M."/>
            <person name="Watanabe M."/>
            <person name="Hiraoka S."/>
            <person name="Chiba Y."/>
            <person name="Ishida S."/>
            <person name="Ono Y."/>
            <person name="Takiguchi S."/>
            <person name="Watanabe S."/>
            <person name="Yosida M."/>
            <person name="Hotuta T."/>
            <person name="Kusano J."/>
            <person name="Kanehori K."/>
            <person name="Takahashi-Fujii A."/>
            <person name="Hara H."/>
            <person name="Tanase T.-O."/>
            <person name="Nomura Y."/>
            <person name="Togiya S."/>
            <person name="Komai F."/>
            <person name="Hara R."/>
            <person name="Takeuchi K."/>
            <person name="Arita M."/>
            <person name="Imose N."/>
            <person name="Musashino K."/>
            <person name="Yuuki H."/>
            <person name="Oshima A."/>
            <person name="Sasaki N."/>
            <person name="Aotsuka S."/>
            <person name="Yoshikawa Y."/>
            <person name="Matsunawa H."/>
            <person name="Ichihara T."/>
            <person name="Shiohata N."/>
            <person name="Sano S."/>
            <person name="Moriya S."/>
            <person name="Momiyama H."/>
            <person name="Satoh N."/>
            <person name="Takami S."/>
            <person name="Terashima Y."/>
            <person name="Suzuki O."/>
            <person name="Nakagawa S."/>
            <person name="Senoh A."/>
            <person name="Mizoguchi H."/>
            <person name="Goto Y."/>
            <person name="Shimizu F."/>
            <person name="Wakebe H."/>
            <person name="Hishigaki H."/>
            <person name="Watanabe T."/>
            <person name="Sugiyama A."/>
            <person name="Takemoto M."/>
            <person name="Kawakami B."/>
            <person name="Yamazaki M."/>
            <person name="Watanabe K."/>
            <person name="Kumagai A."/>
            <person name="Itakura S."/>
            <person name="Fukuzumi Y."/>
            <person name="Fujimori Y."/>
            <person name="Komiyama M."/>
            <person name="Tashiro H."/>
            <person name="Tanigami A."/>
            <person name="Fujiwara T."/>
            <person name="Ono T."/>
            <person name="Yamada K."/>
            <person name="Fujii Y."/>
            <person name="Ozaki K."/>
            <person name="Hirao M."/>
            <person name="Ohmori Y."/>
            <person name="Kawabata A."/>
            <person name="Hikiji T."/>
            <person name="Kobatake N."/>
            <person name="Inagaki H."/>
            <person name="Ikema Y."/>
            <person name="Okamoto S."/>
            <person name="Okitani R."/>
            <person name="Kawakami T."/>
            <person name="Noguchi S."/>
            <person name="Itoh T."/>
            <person name="Shigeta K."/>
            <person name="Senba T."/>
            <person name="Matsumura K."/>
            <person name="Nakajima Y."/>
            <person name="Mizuno T."/>
            <person name="Morinaga M."/>
            <person name="Sasaki M."/>
            <person name="Togashi T."/>
            <person name="Oyama M."/>
            <person name="Hata H."/>
            <person name="Watanabe M."/>
            <person name="Komatsu T."/>
            <person name="Mizushima-Sugano J."/>
            <person name="Satoh T."/>
            <person name="Shirai Y."/>
            <person name="Takahashi Y."/>
            <person name="Nakagawa K."/>
            <person name="Okumura K."/>
            <person name="Nagase T."/>
            <person name="Nomura N."/>
            <person name="Kikuchi H."/>
            <person name="Masuho Y."/>
            <person name="Yamashita R."/>
            <person name="Nakai K."/>
            <person name="Yada T."/>
            <person name="Nakamura Y."/>
            <person name="Ohara O."/>
            <person name="Isogai T."/>
            <person name="Sugano S."/>
        </authorList>
    </citation>
    <scope>NUCLEOTIDE SEQUENCE [LARGE SCALE MRNA]</scope>
    <source>
        <tissue>Brain</tissue>
    </source>
</reference>
<reference key="4">
    <citation type="journal article" date="2004" name="Nature">
        <title>The DNA sequence and biology of human chromosome 19.</title>
        <authorList>
            <person name="Grimwood J."/>
            <person name="Gordon L.A."/>
            <person name="Olsen A.S."/>
            <person name="Terry A."/>
            <person name="Schmutz J."/>
            <person name="Lamerdin J.E."/>
            <person name="Hellsten U."/>
            <person name="Goodstein D."/>
            <person name="Couronne O."/>
            <person name="Tran-Gyamfi M."/>
            <person name="Aerts A."/>
            <person name="Altherr M."/>
            <person name="Ashworth L."/>
            <person name="Bajorek E."/>
            <person name="Black S."/>
            <person name="Branscomb E."/>
            <person name="Caenepeel S."/>
            <person name="Carrano A.V."/>
            <person name="Caoile C."/>
            <person name="Chan Y.M."/>
            <person name="Christensen M."/>
            <person name="Cleland C.A."/>
            <person name="Copeland A."/>
            <person name="Dalin E."/>
            <person name="Dehal P."/>
            <person name="Denys M."/>
            <person name="Detter J.C."/>
            <person name="Escobar J."/>
            <person name="Flowers D."/>
            <person name="Fotopulos D."/>
            <person name="Garcia C."/>
            <person name="Georgescu A.M."/>
            <person name="Glavina T."/>
            <person name="Gomez M."/>
            <person name="Gonzales E."/>
            <person name="Groza M."/>
            <person name="Hammon N."/>
            <person name="Hawkins T."/>
            <person name="Haydu L."/>
            <person name="Ho I."/>
            <person name="Huang W."/>
            <person name="Israni S."/>
            <person name="Jett J."/>
            <person name="Kadner K."/>
            <person name="Kimball H."/>
            <person name="Kobayashi A."/>
            <person name="Larionov V."/>
            <person name="Leem S.-H."/>
            <person name="Lopez F."/>
            <person name="Lou Y."/>
            <person name="Lowry S."/>
            <person name="Malfatti S."/>
            <person name="Martinez D."/>
            <person name="McCready P.M."/>
            <person name="Medina C."/>
            <person name="Morgan J."/>
            <person name="Nelson K."/>
            <person name="Nolan M."/>
            <person name="Ovcharenko I."/>
            <person name="Pitluck S."/>
            <person name="Pollard M."/>
            <person name="Popkie A.P."/>
            <person name="Predki P."/>
            <person name="Quan G."/>
            <person name="Ramirez L."/>
            <person name="Rash S."/>
            <person name="Retterer J."/>
            <person name="Rodriguez A."/>
            <person name="Rogers S."/>
            <person name="Salamov A."/>
            <person name="Salazar A."/>
            <person name="She X."/>
            <person name="Smith D."/>
            <person name="Slezak T."/>
            <person name="Solovyev V."/>
            <person name="Thayer N."/>
            <person name="Tice H."/>
            <person name="Tsai M."/>
            <person name="Ustaszewska A."/>
            <person name="Vo N."/>
            <person name="Wagner M."/>
            <person name="Wheeler J."/>
            <person name="Wu K."/>
            <person name="Xie G."/>
            <person name="Yang J."/>
            <person name="Dubchak I."/>
            <person name="Furey T.S."/>
            <person name="DeJong P."/>
            <person name="Dickson M."/>
            <person name="Gordon D."/>
            <person name="Eichler E.E."/>
            <person name="Pennacchio L.A."/>
            <person name="Richardson P."/>
            <person name="Stubbs L."/>
            <person name="Rokhsar D.S."/>
            <person name="Myers R.M."/>
            <person name="Rubin E.M."/>
            <person name="Lucas S.M."/>
        </authorList>
    </citation>
    <scope>NUCLEOTIDE SEQUENCE [LARGE SCALE GENOMIC DNA]</scope>
</reference>
<reference key="5">
    <citation type="submission" date="2005-09" db="EMBL/GenBank/DDBJ databases">
        <authorList>
            <person name="Mural R.J."/>
            <person name="Istrail S."/>
            <person name="Sutton G.G."/>
            <person name="Florea L."/>
            <person name="Halpern A.L."/>
            <person name="Mobarry C.M."/>
            <person name="Lippert R."/>
            <person name="Walenz B."/>
            <person name="Shatkay H."/>
            <person name="Dew I."/>
            <person name="Miller J.R."/>
            <person name="Flanigan M.J."/>
            <person name="Edwards N.J."/>
            <person name="Bolanos R."/>
            <person name="Fasulo D."/>
            <person name="Halldorsson B.V."/>
            <person name="Hannenhalli S."/>
            <person name="Turner R."/>
            <person name="Yooseph S."/>
            <person name="Lu F."/>
            <person name="Nusskern D.R."/>
            <person name="Shue B.C."/>
            <person name="Zheng X.H."/>
            <person name="Zhong F."/>
            <person name="Delcher A.L."/>
            <person name="Huson D.H."/>
            <person name="Kravitz S.A."/>
            <person name="Mouchard L."/>
            <person name="Reinert K."/>
            <person name="Remington K.A."/>
            <person name="Clark A.G."/>
            <person name="Waterman M.S."/>
            <person name="Eichler E.E."/>
            <person name="Adams M.D."/>
            <person name="Hunkapiller M.W."/>
            <person name="Myers E.W."/>
            <person name="Venter J.C."/>
        </authorList>
    </citation>
    <scope>NUCLEOTIDE SEQUENCE [LARGE SCALE GENOMIC DNA]</scope>
</reference>
<reference key="6">
    <citation type="journal article" date="2004" name="Genome Res.">
        <title>The status, quality, and expansion of the NIH full-length cDNA project: the Mammalian Gene Collection (MGC).</title>
        <authorList>
            <consortium name="The MGC Project Team"/>
        </authorList>
    </citation>
    <scope>NUCLEOTIDE SEQUENCE [LARGE SCALE MRNA]</scope>
    <source>
        <tissue>Lung</tissue>
        <tissue>Uterus</tissue>
    </source>
</reference>
<reference key="7">
    <citation type="journal article" date="1999" name="Int. J. Cancer">
        <title>Antigens recognized by autologous antibody in patients with renal-cell carcinoma.</title>
        <authorList>
            <person name="Scanlan M.J."/>
            <person name="Gordan J.D."/>
            <person name="Williamson B."/>
            <person name="Stockert E."/>
            <person name="Bander N.H."/>
            <person name="Jongeneel C.V."/>
            <person name="Gure A.O."/>
            <person name="Jaeger D."/>
            <person name="Jaeger E."/>
            <person name="Knuth A."/>
            <person name="Chen Y.-T."/>
            <person name="Old L.J."/>
        </authorList>
    </citation>
    <scope>IDENTIFICATION AS A RENAL CANCER ANTIGEN</scope>
    <source>
        <tissue>Renal cell carcinoma</tissue>
    </source>
</reference>
<reference key="8">
    <citation type="journal article" date="2000" name="J. Neurooncol.">
        <title>Frequent loss of heterozygosity at the 19p13.3 locus without LKB1/STK11 mutations in human carcinoma metastases to the brain.</title>
        <authorList>
            <person name="Sobottka S.B."/>
            <person name="Haase M."/>
            <person name="Fitze G."/>
            <person name="Hahn M."/>
            <person name="Schackert H.K."/>
            <person name="Schackert G."/>
        </authorList>
    </citation>
    <scope>INVOLVEMENT IN LUNG CANCER</scope>
</reference>
<reference key="9">
    <citation type="journal article" date="2001" name="Hum. Mol. Genet.">
        <title>LIP1, a cytoplasmic protein functionally linked to the Peutz-Jeghers syndrome kinase LKB1.</title>
        <authorList>
            <person name="Smith D.P."/>
            <person name="Rayter S.I."/>
            <person name="Niederlander C."/>
            <person name="Spicer J."/>
            <person name="Jones C.M."/>
            <person name="Ashworth A."/>
        </authorList>
    </citation>
    <scope>IDENTIFICATION IN A TERNARY COMPLEX COMPOSED OF SMAD4 AND STK11IP</scope>
    <scope>INTERACTION WITH SMAD4 AND STK11IP</scope>
</reference>
<reference key="10">
    <citation type="journal article" date="2001" name="Mol. Cell">
        <title>The Peutz-Jegher gene product LKB1 is a mediator of p53-dependent cell death.</title>
        <authorList>
            <person name="Karuman P."/>
            <person name="Gozani O."/>
            <person name="Odze R.D."/>
            <person name="Zhou X.C."/>
            <person name="Zhu H."/>
            <person name="Shaw R."/>
            <person name="Brien T.P."/>
            <person name="Bozzuto C.D."/>
            <person name="Ooi D."/>
            <person name="Cantley L.C."/>
            <person name="Yuan J."/>
        </authorList>
    </citation>
    <scope>SUBCELLULAR LOCATION</scope>
    <scope>AUTOPHOSPHORYLATION</scope>
    <scope>FUNCTION</scope>
    <scope>MUTAGENESIS OF LYS-78 AND THR-189</scope>
    <scope>PHOSPHORYLATION AT THR-189</scope>
</reference>
<reference key="11">
    <citation type="journal article" date="2002" name="Cancer Res.">
        <title>Inactivation of LKB1/STK11 is a common event in adenocarcinomas of the lung.</title>
        <authorList>
            <person name="Sanchez-Cespedes M."/>
            <person name="Parrella P."/>
            <person name="Esteller M."/>
            <person name="Nomoto S."/>
            <person name="Trink B."/>
            <person name="Engles J.M."/>
            <person name="Westra W.H."/>
            <person name="Herman J.G."/>
            <person name="Sidransky D."/>
        </authorList>
    </citation>
    <scope>INVOLVEMENT IN LUNG CANCER</scope>
</reference>
<reference key="12">
    <citation type="journal article" date="2003" name="EMBO J.">
        <title>Activation of the tumour suppressor kinase LKB1 by the STE20-like pseudokinase STRAD.</title>
        <authorList>
            <person name="Baas A.F."/>
            <person name="Boudeau J."/>
            <person name="Sapkota G.P."/>
            <person name="Smit L."/>
            <person name="Medema R."/>
            <person name="Morrice N.A."/>
            <person name="Alessi D.R."/>
            <person name="Clevers H.C."/>
        </authorList>
    </citation>
    <scope>FUNCTION</scope>
    <scope>SUBCELLULAR LOCATION</scope>
    <scope>INTERACTION WITH STRADA</scope>
    <scope>PHOSPHORYLATION AT THR-336 AND THR-363</scope>
    <scope>CHARACTERIZATION OF VARIANT SPORADIC CANCER TYR-176</scope>
</reference>
<reference key="13">
    <citation type="journal article" date="2003" name="EMBO J.">
        <title>MO25alpha/beta interact with STRADalpha/beta enhancing their ability to bind, activate and localize LKB1 in the cytoplasm.</title>
        <authorList>
            <person name="Boudeau J."/>
            <person name="Baas A.F."/>
            <person name="Deak M."/>
            <person name="Morrice N.A."/>
            <person name="Kieloch A."/>
            <person name="Schutkowski M."/>
            <person name="Prescott A.R."/>
            <person name="Clevers H.C."/>
            <person name="Alessi D.R."/>
        </authorList>
    </citation>
    <scope>FUNCTION</scope>
    <scope>SUBCELLULAR LOCATION</scope>
    <scope>MUTAGENESIS OF ASP-194</scope>
    <scope>IDENTIFICATION IN A COMPLEX WITH STRADA AND CAB39</scope>
    <scope>INTERACTION WITH STRADA; STRADB; CAB39 AND CAB39L</scope>
</reference>
<reference key="14">
    <citation type="journal article" date="2004" name="Cell">
        <title>Complete polarization of single intestinal epithelial cells upon activation of LKB1 by STRAD.</title>
        <authorList>
            <person name="Baas A.F."/>
            <person name="Kuipers J."/>
            <person name="van der Wel N.N."/>
            <person name="Batlle E."/>
            <person name="Koerten H.K."/>
            <person name="Peters P.J."/>
            <person name="Clevers H.C."/>
        </authorList>
    </citation>
    <scope>FUNCTION IN CELL POLARITY</scope>
</reference>
<reference key="15">
    <citation type="journal article" date="2004" name="EMBO J.">
        <title>LKB1 is a master kinase that activates 13 kinases of the AMPK subfamily, including MARK/PAR-1.</title>
        <authorList>
            <person name="Lizcano J.M."/>
            <person name="Goeransson O."/>
            <person name="Toth R."/>
            <person name="Deak M."/>
            <person name="Morrice N.A."/>
            <person name="Boudeau J."/>
            <person name="Hawley S.A."/>
            <person name="Udd L."/>
            <person name="Maekelae T.P."/>
            <person name="Hardie D.G."/>
            <person name="Alessi D.R."/>
        </authorList>
    </citation>
    <scope>FUNCTION</scope>
    <scope>CATALYTIC ACTIVITY</scope>
    <scope>MUTAGENESIS OF ASP-194</scope>
</reference>
<reference key="16">
    <citation type="journal article" date="2004" name="Oncogene">
        <title>Novel and natural knockout lung cancer cell lines for the LKB1/STK11 tumor suppressor gene.</title>
        <authorList>
            <person name="Carretero J."/>
            <person name="Medina P.P."/>
            <person name="Pio R."/>
            <person name="Montuenga L.M."/>
            <person name="Sanchez-Cespedes M."/>
        </authorList>
    </citation>
    <scope>INVOLVEMENT IN LUNG CANCER</scope>
</reference>
<reference key="17">
    <citation type="journal article" date="2005" name="FEBS Lett.">
        <title>Identification of the sucrose non-fermenting related kinase SNRK, as a novel LKB1 substrate.</title>
        <authorList>
            <person name="Jaleel M."/>
            <person name="McBride A."/>
            <person name="Lizcano J.M."/>
            <person name="Deak M."/>
            <person name="Toth R."/>
            <person name="Morrice N.A."/>
            <person name="Alessi D.R."/>
        </authorList>
    </citation>
    <scope>FUNCTION</scope>
</reference>
<reference key="18">
    <citation type="journal article" date="2005" name="Hum. Mol. Genet.">
        <title>LKB1 interacts with and phosphorylates PTEN: a functional link between two proteins involved in cancer predisposing syndromes.</title>
        <authorList>
            <person name="Mehenni H."/>
            <person name="Lin-Marq N."/>
            <person name="Buchet-Poyau K."/>
            <person name="Reymond A."/>
            <person name="Collart M.A."/>
            <person name="Picard D."/>
            <person name="Antonarakis S.E."/>
        </authorList>
    </citation>
    <scope>FUNCTION</scope>
    <scope>INTERACTION WITH PTEN</scope>
    <scope>SUBCELLULAR LOCATION</scope>
    <scope>CHARACTERIZATION OF VARIANT PJS ASN-176</scope>
</reference>
<reference key="19">
    <citation type="journal article" date="2006" name="Cancer Res.">
        <title>LKB1 is recruited to the p21/WAF1 promoter by p53 to mediate transcriptional activation.</title>
        <authorList>
            <person name="Zeng P.Y."/>
            <person name="Berger S.L."/>
        </authorList>
    </citation>
    <scope>FUNCTION</scope>
    <scope>SUBCELLULAR LOCATION</scope>
    <scope>INTERACTION WITH TP53</scope>
</reference>
<reference key="20">
    <citation type="journal article" date="2007" name="Mol. Cell. Biochem.">
        <title>Association of LKB1 with a WD-repeat protein WDR6 is implicated in cell growth arrest and p27(Kip1) induction.</title>
        <authorList>
            <person name="Xie X."/>
            <person name="Wang Z."/>
            <person name="Chen Y."/>
        </authorList>
    </citation>
    <scope>INTERACTION WITH WDR6</scope>
</reference>
<reference key="21">
    <citation type="journal article" date="2007" name="Cancer Sci.">
        <title>LKB1 gene mutations in Japanese lung cancer patients.</title>
        <authorList>
            <person name="Onozato R."/>
            <person name="Kosaka T."/>
            <person name="Achiwa H."/>
            <person name="Kuwano H."/>
            <person name="Takahashi T."/>
            <person name="Yatabe Y."/>
            <person name="Mitsudomi T."/>
        </authorList>
    </citation>
    <scope>INVOLVEMENT IN LUNG CANCER</scope>
</reference>
<reference key="22">
    <citation type="journal article" date="2007" name="Nature">
        <title>LKB1 modulates lung cancer differentiation and metastasis.</title>
        <authorList>
            <person name="Ji H."/>
            <person name="Ramsey M.R."/>
            <person name="Hayes D.N."/>
            <person name="Fan C."/>
            <person name="McNamara K."/>
            <person name="Kozlowski P."/>
            <person name="Torrice C."/>
            <person name="Wu M.C."/>
            <person name="Shimamura T."/>
            <person name="Perera S.A."/>
            <person name="Liang M.C."/>
            <person name="Cai D."/>
            <person name="Naumov G.N."/>
            <person name="Bao L."/>
            <person name="Contreras C.M."/>
            <person name="Li D."/>
            <person name="Chen L."/>
            <person name="Krishnamurthy J."/>
            <person name="Koivunen J."/>
            <person name="Chirieac L.R."/>
            <person name="Padera R.F."/>
            <person name="Bronson R.T."/>
            <person name="Lindeman N.I."/>
            <person name="Christiani D.C."/>
            <person name="Lin X."/>
            <person name="Shapiro G.I."/>
            <person name="Janne P.A."/>
            <person name="Johnson B.E."/>
            <person name="Meyerson M."/>
            <person name="Kwiatkowski D.J."/>
            <person name="Castrillon D.H."/>
            <person name="Bardeesy N."/>
            <person name="Sharpless N.E."/>
            <person name="Wong K.K."/>
        </authorList>
    </citation>
    <scope>INVOLVEMENT IN LUNG CANCER</scope>
</reference>
<reference key="23">
    <citation type="journal article" date="2007" name="Oncogene">
        <title>Prevalence and specificity of LKB1 genetic alterations in lung cancers.</title>
        <authorList>
            <person name="Matsumoto S."/>
            <person name="Iwakawa R."/>
            <person name="Takahashi K."/>
            <person name="Kohno T."/>
            <person name="Nakanishi Y."/>
            <person name="Matsuno Y."/>
            <person name="Suzuki K."/>
            <person name="Nakamoto M."/>
            <person name="Shimizu E."/>
            <person name="Minna J.D."/>
            <person name="Yokota J."/>
        </authorList>
    </citation>
    <scope>INVOLVEMENT IN LUNG CANCER</scope>
</reference>
<reference key="24">
    <citation type="journal article" date="2008" name="Br. J. Cancer">
        <title>Mutations in the LKB1 tumour suppressor are frequently detected in tumours from Caucasian but not Asian lung cancer patients.</title>
        <authorList>
            <person name="Koivunen J.P."/>
            <person name="Kim J."/>
            <person name="Lee J."/>
            <person name="Rogers A.M."/>
            <person name="Park J.O."/>
            <person name="Zhao X."/>
            <person name="Naoki K."/>
            <person name="Okamoto I."/>
            <person name="Nakagawa K."/>
            <person name="Yeap B.Y."/>
            <person name="Meyerson M."/>
            <person name="Wong K.K."/>
            <person name="Richards W.G."/>
            <person name="Sugarbaker D.J."/>
            <person name="Johnson B.E."/>
            <person name="Janne P.A."/>
        </authorList>
    </citation>
    <scope>INVOLVEMENT IN LUNG CANCER</scope>
</reference>
<reference key="25">
    <citation type="journal article" date="2008" name="J. Biol. Chem.">
        <title>Protein kinase Czeta-dependent LKB1 serine 428 phosphorylation increases LKB1 nucleus export and apoptosis in endothelial cells.</title>
        <authorList>
            <person name="Song P."/>
            <person name="Xie Z."/>
            <person name="Wu Y."/>
            <person name="Xu J."/>
            <person name="Dong Y."/>
            <person name="Zou M.H."/>
        </authorList>
    </citation>
    <scope>RETRACTED PAPER</scope>
</reference>
<reference key="26">
    <citation type="journal article" date="2019" name="J. Biol. Chem.">
        <title>Withdrawal: Protein kinase Czeta-dependent LKB1 serine 428 phosphorylation increases LKB1 nucleus export and apoptosis in endothelial cells.</title>
        <authorList>
            <person name="Song P."/>
            <person name="Xie Z."/>
            <person name="Wu Y."/>
            <person name="Dong Y."/>
            <person name="Zou M.H."/>
        </authorList>
    </citation>
    <scope>RETRACTION NOTICE OF PUBMED:18321849</scope>
</reference>
<reference key="27">
    <citation type="journal article" date="2008" name="J. Biol. Chem.">
        <title>SIRT1 modulation of the acetylation status, cytosolic localization, and activity of LKB1. Possible role in AMP-activated protein kinase activation.</title>
        <authorList>
            <person name="Lan F."/>
            <person name="Cacicedo J.M."/>
            <person name="Ruderman N."/>
            <person name="Ido Y."/>
        </authorList>
    </citation>
    <scope>INTERACTION WITH SIRT1</scope>
    <scope>ACETYLATION AT LYS-44; LYS-48; LYS-96; LYS-97; LYS-296; LYS-311; LYS-416; LYS-423 AND LYS-431</scope>
    <scope>MUTAGENESIS OF LYS-44; LYS-48; LYS-96 AND LYS-97</scope>
</reference>
<reference key="28">
    <citation type="journal article" date="2009" name="J. Biol. Chem.">
        <title>Characterization of an alternative splice variant of LKB1.</title>
        <authorList>
            <person name="Denison F.C."/>
            <person name="Hiscock N.J."/>
            <person name="Carling D."/>
            <person name="Woods A."/>
        </authorList>
    </citation>
    <scope>ALTERNATIVE SPLICING (ISOFORMS 1 AND 2)</scope>
    <scope>SUBCELLULAR LOCATION</scope>
    <scope>PHOSPHORYLATION AT SER-428</scope>
    <scope>MUTAGENESIS OF SER-428</scope>
</reference>
<reference key="29">
    <citation type="journal article" date="2009" name="Mol. Cell. Proteomics">
        <title>Large-scale proteomics analysis of the human kinome.</title>
        <authorList>
            <person name="Oppermann F.S."/>
            <person name="Gnad F."/>
            <person name="Olsen J.V."/>
            <person name="Hornberger R."/>
            <person name="Greff Z."/>
            <person name="Keri G."/>
            <person name="Mann M."/>
            <person name="Daub H."/>
        </authorList>
    </citation>
    <scope>IDENTIFICATION BY MASS SPECTROMETRY [LARGE SCALE ANALYSIS]</scope>
</reference>
<reference key="30">
    <citation type="journal article" date="2010" name="J. Thorac. Oncol.">
        <title>Spectrum of LKB1, EGFR, and KRAS mutations in Chinese lung adenocarcinomas.</title>
        <authorList>
            <person name="Gao B."/>
            <person name="Sun Y."/>
            <person name="Zhang J."/>
            <person name="Ren Y."/>
            <person name="Fang R."/>
            <person name="Han X."/>
            <person name="Shen L."/>
            <person name="Liu X.Y."/>
            <person name="Pao W."/>
            <person name="Chen H."/>
            <person name="Ji H."/>
        </authorList>
    </citation>
    <scope>INVOLVEMENT IN LUNG CANCER</scope>
</reference>
<reference key="31">
    <citation type="journal article" date="2011" name="BMC Syst. Biol.">
        <title>Initial characterization of the human central proteome.</title>
        <authorList>
            <person name="Burkard T.R."/>
            <person name="Planyavsky M."/>
            <person name="Kaupe I."/>
            <person name="Breitwieser F.P."/>
            <person name="Buerckstuemmer T."/>
            <person name="Bennett K.L."/>
            <person name="Superti-Furga G."/>
            <person name="Colinge J."/>
        </authorList>
    </citation>
    <scope>IDENTIFICATION BY MASS SPECTROMETRY [LARGE SCALE ANALYSIS]</scope>
</reference>
<reference key="32">
    <citation type="journal article" date="2011" name="Oncogene">
        <title>A new role of NUAK1: directly phosphorylating p53 and regulating cell proliferation.</title>
        <authorList>
            <person name="Hou X."/>
            <person name="Liu J.E."/>
            <person name="Liu W."/>
            <person name="Liu C.Y."/>
            <person name="Liu Z.Y."/>
            <person name="Sun Z.Y."/>
        </authorList>
    </citation>
    <scope>FUNCTION</scope>
</reference>
<reference key="33">
    <citation type="journal article" date="2011" name="FEBS Lett.">
        <title>The role of LKB1 and AMPK in cellular responses to stress and damage.</title>
        <authorList>
            <person name="Alexander A."/>
            <person name="Walker C.L."/>
        </authorList>
    </citation>
    <scope>REVIEW ON FUNCTION</scope>
</reference>
<reference key="34">
    <citation type="journal article" date="2011" name="Protein Cell">
        <title>LKB1 in lung cancerigenesis: a serine/threonine kinase as tumor suppressor.</title>
        <authorList>
            <person name="Gao Y."/>
            <person name="Ge G."/>
            <person name="Ji H."/>
        </authorList>
    </citation>
    <scope>REVIEW ON INVOLVEMENT IN LUNG CANCER</scope>
</reference>
<reference key="35">
    <citation type="journal article" date="2012" name="Nat. Chem. Biol.">
        <title>The orphan nuclear receptor Nur77 regulates LKB1 localization and activates AMPK.</title>
        <authorList>
            <person name="Zhan Y.Y."/>
            <person name="Chen Y."/>
            <person name="Zhang Q."/>
            <person name="Zhuang J.J."/>
            <person name="Tian M."/>
            <person name="Chen H.Z."/>
            <person name="Zhang L.R."/>
            <person name="Zhang H.K."/>
            <person name="He J.P."/>
            <person name="Wang W.J."/>
            <person name="Wu R."/>
            <person name="Wang Y."/>
            <person name="Shi C."/>
            <person name="Yang K."/>
            <person name="Li A.Z."/>
            <person name="Xin Y.Z."/>
            <person name="Li T.Y."/>
            <person name="Yang J.Y."/>
            <person name="Zheng Z.H."/>
            <person name="Yu C.D."/>
            <person name="Lin S.C."/>
            <person name="Chang C."/>
            <person name="Huang P.Q."/>
            <person name="Lin T."/>
            <person name="Wu Q."/>
        </authorList>
    </citation>
    <scope>ACTIVITY REGULATION</scope>
    <scope>INTERACTION WITH NR4A1</scope>
    <scope>SUBCELLULAR LOCATION</scope>
</reference>
<reference key="36">
    <citation type="journal article" date="2013" name="J. Biol. Chem.">
        <title>Integrin-binding protein nischarin interacts with tumor suppressor liver kinase B1 (LKB1) to regulate cell migration of breast epithelial cells.</title>
        <authorList>
            <person name="Jain P."/>
            <person name="Baranwal S."/>
            <person name="Dong S."/>
            <person name="Struckhoff A.P."/>
            <person name="Worthylake R.A."/>
            <person name="Alahari S.K."/>
        </authorList>
    </citation>
    <scope>INTERACTION WITH NISCH</scope>
    <scope>SUBCELLULAR LOCATION</scope>
</reference>
<reference key="37">
    <citation type="journal article" date="2013" name="J. Biol. Chem.">
        <title>Phosphorylation of serine 399 in LKB1 protein short form by protein kinase Czeta is required for its nucleocytoplasmic transport and consequent AMP-activated protein kinase (AMPK) activation.</title>
        <authorList>
            <person name="Zhu H."/>
            <person name="Moriasi C.M."/>
            <person name="Zhang M."/>
            <person name="Zhao Y."/>
            <person name="Zou M.H."/>
        </authorList>
    </citation>
    <scope>SUBCELLULAR LOCATION (ISOFORM 2)</scope>
    <scope>PHOSPHORYLATION AT SER-399 (ISOFORM 2)</scope>
</reference>
<reference key="38">
    <citation type="journal article" date="2013" name="J. Proteome Res.">
        <title>Toward a comprehensive characterization of a human cancer cell phosphoproteome.</title>
        <authorList>
            <person name="Zhou H."/>
            <person name="Di Palma S."/>
            <person name="Preisinger C."/>
            <person name="Peng M."/>
            <person name="Polat A.N."/>
            <person name="Heck A.J."/>
            <person name="Mohammed S."/>
        </authorList>
    </citation>
    <scope>PHOSPHORYLATION [LARGE SCALE ANALYSIS] AT SER-31 AND SER-401</scope>
    <scope>IDENTIFICATION BY MASS SPECTROMETRY [LARGE SCALE ANALYSIS]</scope>
    <source>
        <tissue>Erythroleukemia</tissue>
    </source>
</reference>
<reference key="39">
    <citation type="journal article" date="2014" name="J. Proteomics">
        <title>An enzyme assisted RP-RPLC approach for in-depth analysis of human liver phosphoproteome.</title>
        <authorList>
            <person name="Bian Y."/>
            <person name="Song C."/>
            <person name="Cheng K."/>
            <person name="Dong M."/>
            <person name="Wang F."/>
            <person name="Huang J."/>
            <person name="Sun D."/>
            <person name="Wang L."/>
            <person name="Ye M."/>
            <person name="Zou H."/>
        </authorList>
    </citation>
    <scope>IDENTIFICATION BY MASS SPECTROMETRY [LARGE SCALE ANALYSIS]</scope>
    <source>
        <tissue>Liver</tissue>
    </source>
</reference>
<reference key="40">
    <citation type="journal article" date="2014" name="PLoS Genet.">
        <title>A mouse model uncovers LKB1 as an UVB-induced DNA damage sensor mediating CDKN1A (p21WAF1/CIP1) degradation.</title>
        <authorList>
            <person name="Esteve-Puig R."/>
            <person name="Gil R."/>
            <person name="Gonzalez-Sanchez E."/>
            <person name="Bech-Serra J.J."/>
            <person name="Grueso J."/>
            <person name="Hernandez-Losa J."/>
            <person name="Moline T."/>
            <person name="Canals F."/>
            <person name="Ferrer B."/>
            <person name="Cortes J."/>
            <person name="Bastian B."/>
            <person name="Cajal S.R.Y."/>
            <person name="Martin-Caballero J."/>
            <person name="Flores J.M."/>
            <person name="Vivancos A."/>
            <person name="Garcia-Patos V."/>
            <person name="Recio J.A."/>
        </authorList>
    </citation>
    <scope>FUNCTION</scope>
    <scope>INTERACTION WITH CDKN1A</scope>
</reference>
<reference key="41">
    <citation type="journal article" date="2009" name="Science">
        <title>Structure of the LKB1-STRAD-MO25 complex reveals an allosteric mechanism of kinase activation.</title>
        <authorList>
            <person name="Zeqiraj E."/>
            <person name="Filippi B.M."/>
            <person name="Deak M."/>
            <person name="Alessi D.R."/>
            <person name="van Aalten D.M."/>
        </authorList>
    </citation>
    <scope>X-RAY CRYSTALLOGRAPHY (2.65 ANGSTROMS) OF 43-347 IN COMPLEX WITH STRADA AND CAB39</scope>
    <scope>ACTIVITY REGULATION</scope>
    <scope>CHARACTERIZATION OF VARIANTS SPORADIC CANCER MET-66; GLY-86; ARG-123; SER-157; ASP-163; PRO-170; SER-171; ARG-174; TYR-176; ASN-177; GLU-181; GLN-199; THR-205; PHE-216; VAL-223; PRO-230; PRO-232; ARG-245; PRO-250; HIS-272; TYR-277; GLN-285 AND SER-315</scope>
    <scope>MUTAGENESIS OF ARG-74; ASP-194 AND PHE-204</scope>
</reference>
<reference key="42">
    <citation type="journal article" date="1998" name="Am. J. Hum. Genet.">
        <title>Loss of LKB1 kinase activity in Peutz-Jeghers syndrome, and evidence for allelic and locus heterogeneity.</title>
        <authorList>
            <person name="Mehenni H."/>
            <person name="Gehrig C."/>
            <person name="Nezu J."/>
            <person name="Oku A."/>
            <person name="Shimane M."/>
            <person name="Rossier C."/>
            <person name="Guex N."/>
            <person name="Blouin J.L."/>
            <person name="Scott H.S."/>
            <person name="Antonarakis S.E."/>
        </authorList>
    </citation>
    <scope>VARIANTS PJS 50-LEU--ASP-53 DEL; ASN-176 AND CYS-308</scope>
    <scope>CHARACTERIZATION OF VARIANTS PJS PRO-67; ASN-176 AND CYS-308</scope>
    <scope>MUTAGENESIS OF LYS-78</scope>
</reference>
<reference key="43">
    <citation type="journal article" date="1998" name="Cancer Res.">
        <title>Somatic mutations in LKB1 are rare in sporadic colorectal and testicular tumors.</title>
        <authorList>
            <person name="Avizienyte E."/>
            <person name="Roth S."/>
            <person name="Loukola A."/>
            <person name="Hemminki A."/>
            <person name="Lothe R.A."/>
            <person name="Stenwig A.E."/>
            <person name="Fossaa S.D."/>
            <person name="Salovaara R."/>
            <person name="Aaltonen L.A."/>
        </authorList>
    </citation>
    <scope>VARIANT TGCT ASP-163</scope>
</reference>
<reference key="44">
    <citation type="journal article" date="1998" name="Cancer Res.">
        <title>Frequent somatic mutations in serine/threonine kinase 11/Peutz-Jeghers syndrome gene in left-sided colon cancer.</title>
        <authorList>
            <person name="Dong S.M."/>
            <person name="Kim K.M."/>
            <person name="Kim S.Y."/>
            <person name="Shin M.S."/>
            <person name="Na E.Y."/>
            <person name="Lee S.H."/>
            <person name="Park W.S."/>
            <person name="Yoo N.J."/>
            <person name="Jang J.J."/>
            <person name="Yoon C.Y."/>
            <person name="Kim J.W."/>
            <person name="Kim S.Y."/>
            <person name="Yang Y.M."/>
            <person name="Kim S.H."/>
            <person name="Kim C.S."/>
            <person name="Lee J.Y."/>
        </authorList>
    </citation>
    <scope>VARIANTS COLORECTAL CANCER SER-171; LYS-199; ASN-208; ASP-215; LEU-354 AND MET-367</scope>
</reference>
<reference key="45">
    <citation type="journal article" date="1998" name="Cancer Res.">
        <title>STK11 mutations in Peutz-Jeghers syndrome and sporadic colon cancer.</title>
        <authorList>
            <person name="Resta N."/>
            <person name="Simone C."/>
            <person name="Mareni C."/>
            <person name="Montera M."/>
            <person name="Gentile M."/>
            <person name="Susca F."/>
            <person name="Gristina R."/>
            <person name="Pozzi S."/>
            <person name="Bertario L."/>
            <person name="Bufo P."/>
            <person name="Carlomagno N."/>
            <person name="Ingrosso M."/>
            <person name="Rossini F.P."/>
            <person name="Tenconi R."/>
            <person name="Guanti G."/>
        </authorList>
    </citation>
    <scope>VARIANT COLORECTAL CANCER HIS-314</scope>
</reference>
<reference key="46">
    <citation type="journal article" date="1998" name="Hum. Genet.">
        <title>Nine novel germline mutations of STK11 in ten families with Peutz-Jeghers syndrome.</title>
        <authorList>
            <person name="Nakagawa H."/>
            <person name="Koyama K."/>
            <person name="Miyoshi Y."/>
            <person name="Ando H."/>
            <person name="Baba S."/>
            <person name="Watatani M."/>
            <person name="Yasutomi M."/>
            <person name="Matsuura N."/>
            <person name="Monden M."/>
            <person name="Nakamura Y."/>
        </authorList>
    </citation>
    <scope>VARIANT PJS ASN-247 DEL</scope>
</reference>
<reference key="47">
    <citation type="journal article" date="1998" name="Int. J. Oncol.">
        <title>Mutations of the STK11 gene in sporadic gastric carcinoma.</title>
        <authorList>
            <person name="Park W.S."/>
            <person name="Moon Y.W."/>
            <person name="Yang Y.M."/>
            <person name="Kim Y.S."/>
            <person name="Kim Y.D."/>
            <person name="Fuller B.G."/>
            <person name="Vortmeyer A.O."/>
            <person name="Fogt F."/>
            <person name="Lubensky I.A."/>
            <person name="Zhuang Z."/>
        </authorList>
    </citation>
    <scope>VARIANT GASTRIC CARCINOMA LEU-324</scope>
</reference>
<reference key="48">
    <citation type="journal article" date="1998" name="Nature">
        <title>A serine/threonine kinase gene defective in Peutz-Jeghers syndrome.</title>
        <authorList>
            <person name="Hemminki A."/>
            <person name="Markie D."/>
            <person name="Tomlinson I."/>
            <person name="Avizienyte E."/>
            <person name="Roth S."/>
            <person name="Loukola A."/>
            <person name="Bignell G."/>
            <person name="Warren W."/>
            <person name="Aminoff M."/>
            <person name="Hoeglund P."/>
            <person name="Jaervinen H."/>
            <person name="Kristo P."/>
            <person name="Pelin K."/>
            <person name="Ridanpaeae M."/>
            <person name="Salovaara R."/>
            <person name="Toro T."/>
            <person name="Bodmer W."/>
            <person name="Olschwang S."/>
            <person name="Olsen A.S."/>
            <person name="Stratton M.R."/>
            <person name="de la Chapelle A."/>
            <person name="Aaltonen L.A."/>
        </authorList>
    </citation>
    <scope>VARIANTS PJS PRO-67 AND 303-ILE--GLN-306 DELINS ASN</scope>
</reference>
<reference key="49">
    <citation type="journal article" date="1999" name="Am. J. Pathol.">
        <title>LKB1 somatic mutations in sporadic cancers.</title>
        <authorList>
            <person name="Avizienyte E."/>
            <person name="Loukola A."/>
            <person name="Roth S."/>
            <person name="Hemminki A."/>
            <person name="Tarkkanen M."/>
            <person name="Salovaara R."/>
            <person name="Arola J."/>
            <person name="Butzow R."/>
            <person name="Husgafvel-Pursiainen K."/>
            <person name="Kokkola A."/>
            <person name="Jarvinen H."/>
            <person name="Aaltonen L.A."/>
        </authorList>
    </citation>
    <scope>VARIANT LUNG CANCER VAL-194</scope>
</reference>
<reference key="50">
    <citation type="journal article" date="1999" name="Hum. Mutat.">
        <title>Novel mutations in the LKB1/STK11 gene in Dutch Peutz-Jeghers families.</title>
        <authorList>
            <person name="Westerman A.M."/>
            <person name="Entius M.M."/>
            <person name="Boor P.P.C."/>
            <person name="Koole R."/>
            <person name="de Baar E."/>
            <person name="Offerhaus G.J.A."/>
            <person name="Lubinski J."/>
            <person name="Lindhout D."/>
            <person name="Halley D.J.J."/>
            <person name="de Rooij F.W.M."/>
            <person name="Wilson J.H.P."/>
        </authorList>
    </citation>
    <scope>VARIANTS PJS 162-ASP--LEU-164 DELINS ASN-ASP-MET; ASN-194 AND LYS-297</scope>
</reference>
<reference key="51">
    <citation type="journal article" date="1999" name="Hum. Mol. Genet.">
        <title>Mutations and impaired function of LKB1 in familial and non-familial Peutz-Jeghers syndrome and a sporadic testicular cancer.</title>
        <authorList>
            <person name="Ylikorkala A."/>
            <person name="Avizienyte E."/>
            <person name="Tomlinson I.P."/>
            <person name="Tiainen M."/>
            <person name="Roth S."/>
            <person name="Loukola A."/>
            <person name="Hemminki A."/>
            <person name="Johansson M."/>
            <person name="Sistonen P."/>
            <person name="Markie D."/>
            <person name="Neale K."/>
            <person name="Phillips R."/>
            <person name="Zauber P."/>
            <person name="Twama T."/>
            <person name="Sampson J."/>
            <person name="Jaervinen H."/>
            <person name="Maekelae T.P."/>
            <person name="Aaltonen L.A."/>
        </authorList>
    </citation>
    <scope>CHARACTERIZATION OF VARIANT TGCT ASP-163</scope>
</reference>
<reference key="52">
    <citation type="journal article" date="1999" name="Jpn. J. Cancer Res.">
        <title>Mutational analysis of STK11 gene in ovarian carcinomas.</title>
        <authorList>
            <person name="Nishioka Y."/>
            <person name="Kobayashi K."/>
            <person name="Sagae S."/>
            <person name="Sugimura M."/>
            <person name="Ishioka S."/>
            <person name="Nagata M."/>
            <person name="Terasawa K."/>
            <person name="Tokino T."/>
            <person name="Kudo R."/>
        </authorList>
    </citation>
    <scope>VARIANT OVARIAN CARCINOMA LEU-281</scope>
</reference>
<reference key="53">
    <citation type="journal article" date="1999" name="J. Invest. Dermatol.">
        <title>Somatic mutations in the Peutz-Jeghers (LKB1/STKII) gene in sporadic malignant melanomas.</title>
        <authorList>
            <person name="Rowan A."/>
            <person name="Bataille V."/>
            <person name="MacKie R."/>
            <person name="Healy E."/>
            <person name="Bicknell D."/>
            <person name="Bodmer W."/>
            <person name="Tomlinson I."/>
        </authorList>
    </citation>
    <scope>VARIANTS MELANOMA ASP-49 AND ARG-135</scope>
</reference>
<reference key="54">
    <citation type="journal article" date="1999" name="Oncogene">
        <title>Somatic mutation of the Peutz-Jeghers syndrome gene, LKB1/STK11, in malignant melanoma.</title>
        <authorList>
            <person name="Guldberg P."/>
            <person name="thor Straten P."/>
            <person name="Ahrenkiel V."/>
            <person name="Seremet T."/>
            <person name="Kirkin A.F."/>
            <person name="Zeuthen J."/>
        </authorList>
    </citation>
    <scope>VARIANT MELANOMA TYR-194</scope>
</reference>
<reference key="55">
    <citation type="journal article" date="2002" name="Clin. Genet.">
        <title>Mutation analysis of the STK11/LKB1 gene and clinical characteristics of an Australian series of Peutz-Jeghers syndrome patients.</title>
        <authorList>
            <person name="Scott R.J."/>
            <person name="Crooks R."/>
            <person name="Meldrum C.J."/>
            <person name="Thomas L."/>
            <person name="Smith C.J.A."/>
            <person name="Mowat D."/>
            <person name="McPhillips M."/>
            <person name="Spigelman A.D."/>
        </authorList>
    </citation>
    <scope>VARIANTS PJS CYS-239 AND SER-315</scope>
</reference>
<reference key="56">
    <citation type="journal article" date="2003" name="Lab. Invest.">
        <title>Mutations in the STK11 gene characterize minimal deviation adenocarcinoma of the uterine cervix.</title>
        <authorList>
            <person name="Kuragaki C."/>
            <person name="Enomoto T."/>
            <person name="Ueno Y."/>
            <person name="Sun H."/>
            <person name="Fujita M."/>
            <person name="Nakashima R."/>
            <person name="Ueda Y."/>
            <person name="Wada H."/>
            <person name="Murata Y."/>
            <person name="Toki T."/>
            <person name="Konishi I."/>
            <person name="Fujii S."/>
        </authorList>
    </citation>
    <scope>VARIANTS CERVICAL CANCER LYS-14; PRO-160 AND LEU-231</scope>
    <scope>VARIANT CERVICAL CARCINOMA MET-66</scope>
</reference>
<reference key="57">
    <citation type="journal article" date="2007" name="Nature">
        <title>Patterns of somatic mutation in human cancer genomes.</title>
        <authorList>
            <person name="Greenman C."/>
            <person name="Stephens P."/>
            <person name="Smith R."/>
            <person name="Dalgliesh G.L."/>
            <person name="Hunter C."/>
            <person name="Bignell G."/>
            <person name="Davies H."/>
            <person name="Teague J."/>
            <person name="Butler A."/>
            <person name="Stevens C."/>
            <person name="Edkins S."/>
            <person name="O'Meara S."/>
            <person name="Vastrik I."/>
            <person name="Schmidt E.E."/>
            <person name="Avis T."/>
            <person name="Barthorpe S."/>
            <person name="Bhamra G."/>
            <person name="Buck G."/>
            <person name="Choudhury B."/>
            <person name="Clements J."/>
            <person name="Cole J."/>
            <person name="Dicks E."/>
            <person name="Forbes S."/>
            <person name="Gray K."/>
            <person name="Halliday K."/>
            <person name="Harrison R."/>
            <person name="Hills K."/>
            <person name="Hinton J."/>
            <person name="Jenkinson A."/>
            <person name="Jones D."/>
            <person name="Menzies A."/>
            <person name="Mironenko T."/>
            <person name="Perry J."/>
            <person name="Raine K."/>
            <person name="Richardson D."/>
            <person name="Shepherd R."/>
            <person name="Small A."/>
            <person name="Tofts C."/>
            <person name="Varian J."/>
            <person name="Webb T."/>
            <person name="West S."/>
            <person name="Widaa S."/>
            <person name="Yates A."/>
            <person name="Cahill D.P."/>
            <person name="Louis D.N."/>
            <person name="Goldstraw P."/>
            <person name="Nicholson A.G."/>
            <person name="Brasseur F."/>
            <person name="Looijenga L."/>
            <person name="Weber B.L."/>
            <person name="Chiew Y.-E."/>
            <person name="DeFazio A."/>
            <person name="Greaves M.F."/>
            <person name="Green A.R."/>
            <person name="Campbell P."/>
            <person name="Birney E."/>
            <person name="Easton D.F."/>
            <person name="Chenevix-Trench G."/>
            <person name="Tan M.-H."/>
            <person name="Khoo S.K."/>
            <person name="Teh B.T."/>
            <person name="Yuen S.T."/>
            <person name="Leung S.Y."/>
            <person name="Wooster R."/>
            <person name="Futreal P.A."/>
            <person name="Stratton M.R."/>
        </authorList>
    </citation>
    <scope>VARIANT [LARGE SCALE ANALYSIS] LYS-87</scope>
</reference>
<reference key="58">
    <citation type="journal article" date="2011" name="Clin. Res. Hepatol. Gastroenterol.">
        <title>A novel de novo mutation in LKB1 gene in a Chinese Peutz Jeghers syndrome patient significantly diminished p53 activity.</title>
        <authorList>
            <person name="Liu L."/>
            <person name="Du X."/>
            <person name="Nie J."/>
        </authorList>
    </citation>
    <scope>VARIANT PJS GLY-16</scope>
</reference>
<keyword id="KW-0002">3D-structure</keyword>
<keyword id="KW-0007">Acetylation</keyword>
<keyword id="KW-0025">Alternative splicing</keyword>
<keyword id="KW-0053">Apoptosis</keyword>
<keyword id="KW-0067">ATP-binding</keyword>
<keyword id="KW-0072">Autophagy</keyword>
<keyword id="KW-0131">Cell cycle</keyword>
<keyword id="KW-0963">Cytoplasm</keyword>
<keyword id="KW-0221">Differentiation</keyword>
<keyword id="KW-0225">Disease variant</keyword>
<keyword id="KW-0227">DNA damage</keyword>
<keyword id="KW-0418">Kinase</keyword>
<keyword id="KW-0449">Lipoprotein</keyword>
<keyword id="KW-0460">Magnesium</keyword>
<keyword id="KW-0464">Manganese</keyword>
<keyword id="KW-0472">Membrane</keyword>
<keyword id="KW-0479">Metal-binding</keyword>
<keyword id="KW-0488">Methylation</keyword>
<keyword id="KW-0496">Mitochondrion</keyword>
<keyword id="KW-0547">Nucleotide-binding</keyword>
<keyword id="KW-0539">Nucleus</keyword>
<keyword id="KW-0564">Palmitate</keyword>
<keyword id="KW-0597">Phosphoprotein</keyword>
<keyword id="KW-0636">Prenylation</keyword>
<keyword id="KW-1267">Proteomics identification</keyword>
<keyword id="KW-1185">Reference proteome</keyword>
<keyword id="KW-0723">Serine/threonine-protein kinase</keyword>
<keyword id="KW-0744">Spermatogenesis</keyword>
<keyword id="KW-0808">Transferase</keyword>
<keyword id="KW-0043">Tumor suppressor</keyword>
<organism>
    <name type="scientific">Homo sapiens</name>
    <name type="common">Human</name>
    <dbReference type="NCBI Taxonomy" id="9606"/>
    <lineage>
        <taxon>Eukaryota</taxon>
        <taxon>Metazoa</taxon>
        <taxon>Chordata</taxon>
        <taxon>Craniata</taxon>
        <taxon>Vertebrata</taxon>
        <taxon>Euteleostomi</taxon>
        <taxon>Mammalia</taxon>
        <taxon>Eutheria</taxon>
        <taxon>Euarchontoglires</taxon>
        <taxon>Primates</taxon>
        <taxon>Haplorrhini</taxon>
        <taxon>Catarrhini</taxon>
        <taxon>Hominidae</taxon>
        <taxon>Homo</taxon>
    </lineage>
</organism>
<dbReference type="EC" id="2.7.11.1" evidence="16"/>
<dbReference type="EMBL" id="U63333">
    <property type="protein sequence ID" value="AAB05809.1"/>
    <property type="molecule type" value="mRNA"/>
</dbReference>
<dbReference type="EMBL" id="AF035625">
    <property type="protein sequence ID" value="AAC39527.1"/>
    <property type="molecule type" value="mRNA"/>
</dbReference>
<dbReference type="EMBL" id="AF032984">
    <property type="protein sequence ID" value="AAB97833.1"/>
    <property type="molecule type" value="Genomic_DNA"/>
</dbReference>
<dbReference type="EMBL" id="AF055327">
    <property type="protein sequence ID" value="AAC15742.1"/>
    <property type="molecule type" value="Genomic_DNA"/>
</dbReference>
<dbReference type="EMBL" id="AF055320">
    <property type="protein sequence ID" value="AAC15742.1"/>
    <property type="status" value="JOINED"/>
    <property type="molecule type" value="Genomic_DNA"/>
</dbReference>
<dbReference type="EMBL" id="AF055321">
    <property type="protein sequence ID" value="AAC15742.1"/>
    <property type="status" value="JOINED"/>
    <property type="molecule type" value="Genomic_DNA"/>
</dbReference>
<dbReference type="EMBL" id="AF055322">
    <property type="protein sequence ID" value="AAC15742.1"/>
    <property type="status" value="JOINED"/>
    <property type="molecule type" value="Genomic_DNA"/>
</dbReference>
<dbReference type="EMBL" id="AF055323">
    <property type="protein sequence ID" value="AAC15742.1"/>
    <property type="status" value="JOINED"/>
    <property type="molecule type" value="Genomic_DNA"/>
</dbReference>
<dbReference type="EMBL" id="AF055324">
    <property type="protein sequence ID" value="AAC15742.1"/>
    <property type="status" value="JOINED"/>
    <property type="molecule type" value="Genomic_DNA"/>
</dbReference>
<dbReference type="EMBL" id="AF055325">
    <property type="protein sequence ID" value="AAC15742.1"/>
    <property type="status" value="JOINED"/>
    <property type="molecule type" value="Genomic_DNA"/>
</dbReference>
<dbReference type="EMBL" id="AF055326">
    <property type="protein sequence ID" value="AAC15742.1"/>
    <property type="status" value="JOINED"/>
    <property type="molecule type" value="Genomic_DNA"/>
</dbReference>
<dbReference type="EMBL" id="AK314858">
    <property type="protein sequence ID" value="BAG37374.1"/>
    <property type="molecule type" value="mRNA"/>
</dbReference>
<dbReference type="EMBL" id="AC011544">
    <property type="status" value="NOT_ANNOTATED_CDS"/>
    <property type="molecule type" value="Genomic_DNA"/>
</dbReference>
<dbReference type="EMBL" id="AC004221">
    <property type="status" value="NOT_ANNOTATED_CDS"/>
    <property type="molecule type" value="Genomic_DNA"/>
</dbReference>
<dbReference type="EMBL" id="CH471139">
    <property type="protein sequence ID" value="EAW69540.1"/>
    <property type="molecule type" value="Genomic_DNA"/>
</dbReference>
<dbReference type="EMBL" id="BC007981">
    <property type="protein sequence ID" value="AAH07981.1"/>
    <property type="molecule type" value="mRNA"/>
</dbReference>
<dbReference type="EMBL" id="BC019334">
    <property type="protein sequence ID" value="AAH19334.1"/>
    <property type="molecule type" value="mRNA"/>
</dbReference>
<dbReference type="CCDS" id="CCDS45896.1">
    <molecule id="Q15831-1"/>
</dbReference>
<dbReference type="RefSeq" id="NP_000446.1">
    <molecule id="Q15831-1"/>
    <property type="nucleotide sequence ID" value="NM_000455.5"/>
</dbReference>
<dbReference type="RefSeq" id="NP_001394184.1">
    <molecule id="Q15831-2"/>
    <property type="nucleotide sequence ID" value="NM_001407255.1"/>
</dbReference>
<dbReference type="RefSeq" id="XP_005259675.1">
    <property type="nucleotide sequence ID" value="XM_005259618.3"/>
</dbReference>
<dbReference type="PDB" id="2WTK">
    <property type="method" value="X-ray"/>
    <property type="resolution" value="2.65 A"/>
    <property type="chains" value="C/F=43-347"/>
</dbReference>
<dbReference type="PDB" id="4ZDR">
    <property type="method" value="X-ray"/>
    <property type="resolution" value="2.90 A"/>
    <property type="chains" value="A/B=333-340"/>
</dbReference>
<dbReference type="PDB" id="5WXN">
    <property type="method" value="X-ray"/>
    <property type="resolution" value="2.93 A"/>
    <property type="chains" value="C/D=331-343"/>
</dbReference>
<dbReference type="PDB" id="8VSU">
    <property type="method" value="EM"/>
    <property type="resolution" value="2.86 A"/>
    <property type="chains" value="C=1-433"/>
</dbReference>
<dbReference type="PDBsum" id="2WTK"/>
<dbReference type="PDBsum" id="4ZDR"/>
<dbReference type="PDBsum" id="5WXN"/>
<dbReference type="PDBsum" id="8VSU"/>
<dbReference type="EMDB" id="EMD-43506"/>
<dbReference type="SMR" id="Q15831"/>
<dbReference type="BioGRID" id="112670">
    <property type="interactions" value="322"/>
</dbReference>
<dbReference type="ComplexPortal" id="CPX-2431">
    <property type="entry name" value="LKB1-STRAD-MO25 serine/threonine protein kinase complex, CAB39L-STRADA variant"/>
</dbReference>
<dbReference type="ComplexPortal" id="CPX-2845">
    <property type="entry name" value="LKB1-STRAD-MO25 serine/threonine protein kinase complex, CAB39-STRADA variant"/>
</dbReference>
<dbReference type="ComplexPortal" id="CPX-2868">
    <property type="entry name" value="LKB1-STRAD-MO25 serine/threonine protein kinase complex, CAB39-STRADB variant"/>
</dbReference>
<dbReference type="ComplexPortal" id="CPX-2869">
    <property type="entry name" value="LKB1-STRAD-MO25 serine/threonine protein kinase complex, CAB39L-STRADB variant"/>
</dbReference>
<dbReference type="CORUM" id="Q15831"/>
<dbReference type="DIP" id="DIP-31317N"/>
<dbReference type="FunCoup" id="Q15831">
    <property type="interactions" value="3083"/>
</dbReference>
<dbReference type="IntAct" id="Q15831">
    <property type="interactions" value="212"/>
</dbReference>
<dbReference type="MINT" id="Q15831"/>
<dbReference type="STRING" id="9606.ENSP00000324856"/>
<dbReference type="BindingDB" id="Q15831"/>
<dbReference type="ChEMBL" id="CHEMBL5606"/>
<dbReference type="DrugCentral" id="Q15831"/>
<dbReference type="GlyGen" id="Q15831">
    <property type="glycosylation" value="1 site, 1 O-linked glycan (1 site)"/>
</dbReference>
<dbReference type="iPTMnet" id="Q15831"/>
<dbReference type="PhosphoSitePlus" id="Q15831"/>
<dbReference type="BioMuta" id="STK11"/>
<dbReference type="DMDM" id="3024670"/>
<dbReference type="CPTAC" id="CPTAC-2999"/>
<dbReference type="CPTAC" id="CPTAC-3000"/>
<dbReference type="jPOST" id="Q15831"/>
<dbReference type="MassIVE" id="Q15831"/>
<dbReference type="PaxDb" id="9606-ENSP00000324856"/>
<dbReference type="PeptideAtlas" id="Q15831"/>
<dbReference type="ProteomicsDB" id="60780">
    <molecule id="Q15831-1"/>
</dbReference>
<dbReference type="ProteomicsDB" id="60781">
    <molecule id="Q15831-2"/>
</dbReference>
<dbReference type="Pumba" id="Q15831"/>
<dbReference type="Antibodypedia" id="2048">
    <property type="antibodies" value="1357 antibodies from 44 providers"/>
</dbReference>
<dbReference type="CPTC" id="Q15831">
    <property type="antibodies" value="1 antibody"/>
</dbReference>
<dbReference type="DNASU" id="6794"/>
<dbReference type="Ensembl" id="ENST00000326873.12">
    <molecule id="Q15831-1"/>
    <property type="protein sequence ID" value="ENSP00000324856.6"/>
    <property type="gene ID" value="ENSG00000118046.18"/>
</dbReference>
<dbReference type="Ensembl" id="ENST00000585465.3">
    <molecule id="Q15831-2"/>
    <property type="protein sequence ID" value="ENSP00000490268.2"/>
    <property type="gene ID" value="ENSG00000118046.18"/>
</dbReference>
<dbReference type="Ensembl" id="ENST00000652231.1">
    <molecule id="Q15831-2"/>
    <property type="protein sequence ID" value="ENSP00000498804.1"/>
    <property type="gene ID" value="ENSG00000118046.18"/>
</dbReference>
<dbReference type="GeneID" id="6794"/>
<dbReference type="KEGG" id="hsa:6794"/>
<dbReference type="MANE-Select" id="ENST00000326873.12">
    <property type="protein sequence ID" value="ENSP00000324856.6"/>
    <property type="RefSeq nucleotide sequence ID" value="NM_000455.5"/>
    <property type="RefSeq protein sequence ID" value="NP_000446.1"/>
</dbReference>
<dbReference type="UCSC" id="uc002lrl.2">
    <molecule id="Q15831-1"/>
    <property type="organism name" value="human"/>
</dbReference>
<dbReference type="AGR" id="HGNC:11389"/>
<dbReference type="CTD" id="6794"/>
<dbReference type="DisGeNET" id="6794"/>
<dbReference type="GeneCards" id="STK11"/>
<dbReference type="GeneReviews" id="STK11"/>
<dbReference type="HGNC" id="HGNC:11389">
    <property type="gene designation" value="STK11"/>
</dbReference>
<dbReference type="HPA" id="ENSG00000118046">
    <property type="expression patterns" value="Low tissue specificity"/>
</dbReference>
<dbReference type="MalaCards" id="STK11"/>
<dbReference type="MIM" id="175200">
    <property type="type" value="phenotype"/>
</dbReference>
<dbReference type="MIM" id="273300">
    <property type="type" value="phenotype"/>
</dbReference>
<dbReference type="MIM" id="602216">
    <property type="type" value="gene"/>
</dbReference>
<dbReference type="neXtProt" id="NX_Q15831"/>
<dbReference type="OpenTargets" id="ENSG00000118046"/>
<dbReference type="Orphanet" id="2869">
    <property type="disease" value="Peutz-Jeghers syndrome"/>
</dbReference>
<dbReference type="PharmGKB" id="PA36198"/>
<dbReference type="VEuPathDB" id="HostDB:ENSG00000118046"/>
<dbReference type="eggNOG" id="KOG0583">
    <property type="taxonomic scope" value="Eukaryota"/>
</dbReference>
<dbReference type="GeneTree" id="ENSGT00940000158050"/>
<dbReference type="HOGENOM" id="CLU_000288_1_2_1"/>
<dbReference type="InParanoid" id="Q15831"/>
<dbReference type="OMA" id="AYHYGSE"/>
<dbReference type="OrthoDB" id="68483at2759"/>
<dbReference type="PAN-GO" id="Q15831">
    <property type="GO annotations" value="10 GO annotations based on evolutionary models"/>
</dbReference>
<dbReference type="PhylomeDB" id="Q15831"/>
<dbReference type="TreeFam" id="TF105322"/>
<dbReference type="BRENDA" id="2.7.11.1">
    <property type="organism ID" value="2681"/>
</dbReference>
<dbReference type="PathwayCommons" id="Q15831"/>
<dbReference type="Reactome" id="R-HSA-163680">
    <property type="pathway name" value="AMPK inhibits chREBP transcriptional activation activity"/>
</dbReference>
<dbReference type="Reactome" id="R-HSA-380972">
    <property type="pathway name" value="Energy dependent regulation of mTOR by LKB1-AMPK"/>
</dbReference>
<dbReference type="Reactome" id="R-HSA-6804756">
    <property type="pathway name" value="Regulation of TP53 Activity through Phosphorylation"/>
</dbReference>
<dbReference type="Reactome" id="R-HSA-9614657">
    <property type="pathway name" value="FOXO-mediated transcription of cell death genes"/>
</dbReference>
<dbReference type="SignaLink" id="Q15831"/>
<dbReference type="SIGNOR" id="Q15831"/>
<dbReference type="BioGRID-ORCS" id="6794">
    <property type="hits" value="153 hits in 1229 CRISPR screens"/>
</dbReference>
<dbReference type="ChiTaRS" id="STK11">
    <property type="organism name" value="human"/>
</dbReference>
<dbReference type="EvolutionaryTrace" id="Q15831"/>
<dbReference type="GeneWiki" id="STK11"/>
<dbReference type="GenomeRNAi" id="6794"/>
<dbReference type="Pharos" id="Q15831">
    <property type="development level" value="Tchem"/>
</dbReference>
<dbReference type="PRO" id="PR:Q15831"/>
<dbReference type="Proteomes" id="UP000005640">
    <property type="component" value="Chromosome 19"/>
</dbReference>
<dbReference type="RNAct" id="Q15831">
    <property type="molecule type" value="protein"/>
</dbReference>
<dbReference type="Bgee" id="ENSG00000118046">
    <property type="expression patterns" value="Expressed in left testis and 156 other cell types or tissues"/>
</dbReference>
<dbReference type="ExpressionAtlas" id="Q15831">
    <property type="expression patterns" value="baseline and differential"/>
</dbReference>
<dbReference type="GO" id="GO:0005813">
    <property type="term" value="C:centrosome"/>
    <property type="evidence" value="ECO:0000314"/>
    <property type="project" value="HPA"/>
</dbReference>
<dbReference type="GO" id="GO:0005929">
    <property type="term" value="C:cilium"/>
    <property type="evidence" value="ECO:0000314"/>
    <property type="project" value="HPA"/>
</dbReference>
<dbReference type="GO" id="GO:0005737">
    <property type="term" value="C:cytoplasm"/>
    <property type="evidence" value="ECO:0000314"/>
    <property type="project" value="MGI"/>
</dbReference>
<dbReference type="GO" id="GO:0005829">
    <property type="term" value="C:cytosol"/>
    <property type="evidence" value="ECO:0000314"/>
    <property type="project" value="HPA"/>
</dbReference>
<dbReference type="GO" id="GO:0070062">
    <property type="term" value="C:extracellular exosome"/>
    <property type="evidence" value="ECO:0007005"/>
    <property type="project" value="UniProtKB"/>
</dbReference>
<dbReference type="GO" id="GO:0140535">
    <property type="term" value="C:intracellular protein-containing complex"/>
    <property type="evidence" value="ECO:0000314"/>
    <property type="project" value="UniProtKB"/>
</dbReference>
<dbReference type="GO" id="GO:0016020">
    <property type="term" value="C:membrane"/>
    <property type="evidence" value="ECO:0000250"/>
    <property type="project" value="UniProtKB"/>
</dbReference>
<dbReference type="GO" id="GO:0005739">
    <property type="term" value="C:mitochondrion"/>
    <property type="evidence" value="ECO:0000314"/>
    <property type="project" value="UniProtKB"/>
</dbReference>
<dbReference type="GO" id="GO:0005654">
    <property type="term" value="C:nucleoplasm"/>
    <property type="evidence" value="ECO:0000314"/>
    <property type="project" value="HPA"/>
</dbReference>
<dbReference type="GO" id="GO:0005634">
    <property type="term" value="C:nucleus"/>
    <property type="evidence" value="ECO:0000314"/>
    <property type="project" value="MGI"/>
</dbReference>
<dbReference type="GO" id="GO:1902554">
    <property type="term" value="C:serine/threonine protein kinase complex"/>
    <property type="evidence" value="ECO:0000353"/>
    <property type="project" value="ComplexPortal"/>
</dbReference>
<dbReference type="GO" id="GO:0005524">
    <property type="term" value="F:ATP binding"/>
    <property type="evidence" value="ECO:0000314"/>
    <property type="project" value="UniProtKB"/>
</dbReference>
<dbReference type="GO" id="GO:0030275">
    <property type="term" value="F:LRR domain binding"/>
    <property type="evidence" value="ECO:0007669"/>
    <property type="project" value="Ensembl"/>
</dbReference>
<dbReference type="GO" id="GO:0000287">
    <property type="term" value="F:magnesium ion binding"/>
    <property type="evidence" value="ECO:0000314"/>
    <property type="project" value="UniProtKB"/>
</dbReference>
<dbReference type="GO" id="GO:0002039">
    <property type="term" value="F:p53 binding"/>
    <property type="evidence" value="ECO:0000314"/>
    <property type="project" value="UniProtKB"/>
</dbReference>
<dbReference type="GO" id="GO:0030295">
    <property type="term" value="F:protein kinase activator activity"/>
    <property type="evidence" value="ECO:0000314"/>
    <property type="project" value="UniProtKB"/>
</dbReference>
<dbReference type="GO" id="GO:0106310">
    <property type="term" value="F:protein serine kinase activity"/>
    <property type="evidence" value="ECO:0007669"/>
    <property type="project" value="RHEA"/>
</dbReference>
<dbReference type="GO" id="GO:0004674">
    <property type="term" value="F:protein serine/threonine kinase activity"/>
    <property type="evidence" value="ECO:0000314"/>
    <property type="project" value="UniProtKB"/>
</dbReference>
<dbReference type="GO" id="GO:0032147">
    <property type="term" value="P:activation of protein kinase activity"/>
    <property type="evidence" value="ECO:0000314"/>
    <property type="project" value="MGI"/>
</dbReference>
<dbReference type="GO" id="GO:0043276">
    <property type="term" value="P:anoikis"/>
    <property type="evidence" value="ECO:0000315"/>
    <property type="project" value="BHF-UCL"/>
</dbReference>
<dbReference type="GO" id="GO:0006914">
    <property type="term" value="P:autophagy"/>
    <property type="evidence" value="ECO:0007669"/>
    <property type="project" value="UniProtKB-KW"/>
</dbReference>
<dbReference type="GO" id="GO:0007409">
    <property type="term" value="P:axonogenesis"/>
    <property type="evidence" value="ECO:0007669"/>
    <property type="project" value="Ensembl"/>
</dbReference>
<dbReference type="GO" id="GO:0071493">
    <property type="term" value="P:cellular response to UV-B"/>
    <property type="evidence" value="ECO:0000314"/>
    <property type="project" value="UniProtKB"/>
</dbReference>
<dbReference type="GO" id="GO:0097484">
    <property type="term" value="P:dendrite extension"/>
    <property type="evidence" value="ECO:0007669"/>
    <property type="project" value="Ensembl"/>
</dbReference>
<dbReference type="GO" id="GO:0006974">
    <property type="term" value="P:DNA damage response"/>
    <property type="evidence" value="ECO:0000315"/>
    <property type="project" value="UniProtKB"/>
</dbReference>
<dbReference type="GO" id="GO:0060767">
    <property type="term" value="P:epithelial cell proliferation involved in prostate gland development"/>
    <property type="evidence" value="ECO:0007669"/>
    <property type="project" value="Ensembl"/>
</dbReference>
<dbReference type="GO" id="GO:0030010">
    <property type="term" value="P:establishment of cell polarity"/>
    <property type="evidence" value="ECO:0000315"/>
    <property type="project" value="UniProtKB"/>
</dbReference>
<dbReference type="GO" id="GO:0070314">
    <property type="term" value="P:G1 to G0 transition"/>
    <property type="evidence" value="ECO:0000314"/>
    <property type="project" value="UniProtKB"/>
</dbReference>
<dbReference type="GO" id="GO:0042593">
    <property type="term" value="P:glucose homeostasis"/>
    <property type="evidence" value="ECO:0000250"/>
    <property type="project" value="UniProtKB"/>
</dbReference>
<dbReference type="GO" id="GO:0051645">
    <property type="term" value="P:Golgi localization"/>
    <property type="evidence" value="ECO:0007669"/>
    <property type="project" value="Ensembl"/>
</dbReference>
<dbReference type="GO" id="GO:0072332">
    <property type="term" value="P:intrinsic apoptotic signaling pathway by p53 class mediator"/>
    <property type="evidence" value="ECO:0000314"/>
    <property type="project" value="UniProtKB"/>
</dbReference>
<dbReference type="GO" id="GO:0090090">
    <property type="term" value="P:negative regulation of canonical Wnt signaling pathway"/>
    <property type="evidence" value="ECO:0000315"/>
    <property type="project" value="UniProtKB"/>
</dbReference>
<dbReference type="GO" id="GO:0030308">
    <property type="term" value="P:negative regulation of cell growth"/>
    <property type="evidence" value="ECO:0000250"/>
    <property type="project" value="UniProtKB"/>
</dbReference>
<dbReference type="GO" id="GO:0008285">
    <property type="term" value="P:negative regulation of cell population proliferation"/>
    <property type="evidence" value="ECO:0000315"/>
    <property type="project" value="UniProtKB"/>
</dbReference>
<dbReference type="GO" id="GO:0120163">
    <property type="term" value="P:negative regulation of cold-induced thermogenesis"/>
    <property type="evidence" value="ECO:0000250"/>
    <property type="project" value="YuBioLab"/>
</dbReference>
<dbReference type="GO" id="GO:0060770">
    <property type="term" value="P:negative regulation of epithelial cell proliferation involved in prostate gland development"/>
    <property type="evidence" value="ECO:0007669"/>
    <property type="project" value="Ensembl"/>
</dbReference>
<dbReference type="GO" id="GO:1904262">
    <property type="term" value="P:negative regulation of TORC1 signaling"/>
    <property type="evidence" value="ECO:0000315"/>
    <property type="project" value="ParkinsonsUK-UCL"/>
</dbReference>
<dbReference type="GO" id="GO:0018107">
    <property type="term" value="P:peptidyl-threonine phosphorylation"/>
    <property type="evidence" value="ECO:0000314"/>
    <property type="project" value="UniProtKB"/>
</dbReference>
<dbReference type="GO" id="GO:0010508">
    <property type="term" value="P:positive regulation of autophagy"/>
    <property type="evidence" value="ECO:0000315"/>
    <property type="project" value="ParkinsonsUK-UCL"/>
</dbReference>
<dbReference type="GO" id="GO:0050772">
    <property type="term" value="P:positive regulation of axonogenesis"/>
    <property type="evidence" value="ECO:0007669"/>
    <property type="project" value="Ensembl"/>
</dbReference>
<dbReference type="GO" id="GO:1900182">
    <property type="term" value="P:positive regulation of protein localization to nucleus"/>
    <property type="evidence" value="ECO:0007669"/>
    <property type="project" value="Ensembl"/>
</dbReference>
<dbReference type="GO" id="GO:0030511">
    <property type="term" value="P:positive regulation of transforming growth factor beta receptor signaling pathway"/>
    <property type="evidence" value="ECO:0000315"/>
    <property type="project" value="BHF-UCL"/>
</dbReference>
<dbReference type="GO" id="GO:1901610">
    <property type="term" value="P:positive regulation of vesicle transport along microtubule"/>
    <property type="evidence" value="ECO:0000315"/>
    <property type="project" value="UniProtKB"/>
</dbReference>
<dbReference type="GO" id="GO:0045059">
    <property type="term" value="P:positive thymic T cell selection"/>
    <property type="evidence" value="ECO:0007669"/>
    <property type="project" value="Ensembl"/>
</dbReference>
<dbReference type="GO" id="GO:0046777">
    <property type="term" value="P:protein autophosphorylation"/>
    <property type="evidence" value="ECO:0000314"/>
    <property type="project" value="UniProtKB"/>
</dbReference>
<dbReference type="GO" id="GO:0006470">
    <property type="term" value="P:protein dephosphorylation"/>
    <property type="evidence" value="ECO:0000315"/>
    <property type="project" value="UniProtKB"/>
</dbReference>
<dbReference type="GO" id="GO:0034504">
    <property type="term" value="P:protein localization to nucleus"/>
    <property type="evidence" value="ECO:0007669"/>
    <property type="project" value="Ensembl"/>
</dbReference>
<dbReference type="GO" id="GO:0006468">
    <property type="term" value="P:protein phosphorylation"/>
    <property type="evidence" value="ECO:0000314"/>
    <property type="project" value="UniProtKB"/>
</dbReference>
<dbReference type="GO" id="GO:0051726">
    <property type="term" value="P:regulation of cell cycle"/>
    <property type="evidence" value="ECO:0000304"/>
    <property type="project" value="Reactome"/>
</dbReference>
<dbReference type="GO" id="GO:0001558">
    <property type="term" value="P:regulation of cell growth"/>
    <property type="evidence" value="ECO:0000250"/>
    <property type="project" value="UniProtKB"/>
</dbReference>
<dbReference type="GO" id="GO:0048814">
    <property type="term" value="P:regulation of dendrite morphogenesis"/>
    <property type="evidence" value="ECO:0007669"/>
    <property type="project" value="Ensembl"/>
</dbReference>
<dbReference type="GO" id="GO:0051896">
    <property type="term" value="P:regulation of phosphatidylinositol 3-kinase/protein kinase B signal transduction"/>
    <property type="evidence" value="ECO:0007669"/>
    <property type="project" value="Ensembl"/>
</dbReference>
<dbReference type="GO" id="GO:1901796">
    <property type="term" value="P:regulation of signal transduction by p53 class mediator"/>
    <property type="evidence" value="ECO:0000304"/>
    <property type="project" value="Reactome"/>
</dbReference>
<dbReference type="GO" id="GO:0030111">
    <property type="term" value="P:regulation of Wnt signaling pathway"/>
    <property type="evidence" value="ECO:0000318"/>
    <property type="project" value="GO_Central"/>
</dbReference>
<dbReference type="GO" id="GO:0010212">
    <property type="term" value="P:response to ionizing radiation"/>
    <property type="evidence" value="ECO:0000250"/>
    <property type="project" value="UniProtKB"/>
</dbReference>
<dbReference type="GO" id="GO:0007165">
    <property type="term" value="P:signal transduction"/>
    <property type="evidence" value="ECO:0000318"/>
    <property type="project" value="GO_Central"/>
</dbReference>
<dbReference type="GO" id="GO:0007283">
    <property type="term" value="P:spermatogenesis"/>
    <property type="evidence" value="ECO:0007669"/>
    <property type="project" value="UniProtKB-KW"/>
</dbReference>
<dbReference type="GO" id="GO:0050852">
    <property type="term" value="P:T cell receptor signaling pathway"/>
    <property type="evidence" value="ECO:0007669"/>
    <property type="project" value="Ensembl"/>
</dbReference>
<dbReference type="GO" id="GO:0001894">
    <property type="term" value="P:tissue homeostasis"/>
    <property type="evidence" value="ECO:0007669"/>
    <property type="project" value="Ensembl"/>
</dbReference>
<dbReference type="GO" id="GO:0001944">
    <property type="term" value="P:vasculature development"/>
    <property type="evidence" value="ECO:0000250"/>
    <property type="project" value="UniProtKB"/>
</dbReference>
<dbReference type="CDD" id="cd14119">
    <property type="entry name" value="STKc_LKB1"/>
    <property type="match status" value="1"/>
</dbReference>
<dbReference type="FunFam" id="1.10.510.10:FF:000245">
    <property type="entry name" value="serine/threonine-protein kinase STK11"/>
    <property type="match status" value="1"/>
</dbReference>
<dbReference type="FunFam" id="3.30.200.20:FF:000235">
    <property type="entry name" value="serine/threonine-protein kinase STK11"/>
    <property type="match status" value="1"/>
</dbReference>
<dbReference type="Gene3D" id="3.30.200.20">
    <property type="entry name" value="Phosphorylase Kinase, domain 1"/>
    <property type="match status" value="1"/>
</dbReference>
<dbReference type="Gene3D" id="1.10.510.10">
    <property type="entry name" value="Transferase(Phosphotransferase) domain 1"/>
    <property type="match status" value="1"/>
</dbReference>
<dbReference type="IDEAL" id="IID00613"/>
<dbReference type="InterPro" id="IPR011009">
    <property type="entry name" value="Kinase-like_dom_sf"/>
</dbReference>
<dbReference type="InterPro" id="IPR039154">
    <property type="entry name" value="LKB1_c"/>
</dbReference>
<dbReference type="InterPro" id="IPR000719">
    <property type="entry name" value="Prot_kinase_dom"/>
</dbReference>
<dbReference type="InterPro" id="IPR017441">
    <property type="entry name" value="Protein_kinase_ATP_BS"/>
</dbReference>
<dbReference type="InterPro" id="IPR008271">
    <property type="entry name" value="Ser/Thr_kinase_AS"/>
</dbReference>
<dbReference type="PANTHER" id="PTHR24346">
    <property type="entry name" value="MAP/MICROTUBULE AFFINITY-REGULATING KINASE"/>
    <property type="match status" value="1"/>
</dbReference>
<dbReference type="PANTHER" id="PTHR24346:SF94">
    <property type="entry name" value="NON-SPECIFIC SERINE_THREONINE PROTEIN KINASE"/>
    <property type="match status" value="1"/>
</dbReference>
<dbReference type="Pfam" id="PF00069">
    <property type="entry name" value="Pkinase"/>
    <property type="match status" value="1"/>
</dbReference>
<dbReference type="SMART" id="SM00220">
    <property type="entry name" value="S_TKc"/>
    <property type="match status" value="1"/>
</dbReference>
<dbReference type="SUPFAM" id="SSF56112">
    <property type="entry name" value="Protein kinase-like (PK-like)"/>
    <property type="match status" value="1"/>
</dbReference>
<dbReference type="PROSITE" id="PS00107">
    <property type="entry name" value="PROTEIN_KINASE_ATP"/>
    <property type="match status" value="1"/>
</dbReference>
<dbReference type="PROSITE" id="PS50011">
    <property type="entry name" value="PROTEIN_KINASE_DOM"/>
    <property type="match status" value="1"/>
</dbReference>
<dbReference type="PROSITE" id="PS00108">
    <property type="entry name" value="PROTEIN_KINASE_ST"/>
    <property type="match status" value="1"/>
</dbReference>
<proteinExistence type="evidence at protein level"/>